<organism>
    <name type="scientific">Homo sapiens</name>
    <name type="common">Human</name>
    <dbReference type="NCBI Taxonomy" id="9606"/>
    <lineage>
        <taxon>Eukaryota</taxon>
        <taxon>Metazoa</taxon>
        <taxon>Chordata</taxon>
        <taxon>Craniata</taxon>
        <taxon>Vertebrata</taxon>
        <taxon>Euteleostomi</taxon>
        <taxon>Mammalia</taxon>
        <taxon>Eutheria</taxon>
        <taxon>Euarchontoglires</taxon>
        <taxon>Primates</taxon>
        <taxon>Haplorrhini</taxon>
        <taxon>Catarrhini</taxon>
        <taxon>Hominidae</taxon>
        <taxon>Homo</taxon>
    </lineage>
</organism>
<proteinExistence type="evidence at protein level"/>
<keyword id="KW-0002">3D-structure</keyword>
<keyword id="KW-0158">Chromosome</keyword>
<keyword id="KW-0963">Cytoplasm</keyword>
<keyword id="KW-0206">Cytoskeleton</keyword>
<keyword id="KW-0227">DNA damage</keyword>
<keyword id="KW-0234">DNA repair</keyword>
<keyword id="KW-0238">DNA-binding</keyword>
<keyword id="KW-0539">Nucleus</keyword>
<keyword id="KW-0597">Phosphoprotein</keyword>
<keyword id="KW-1267">Proteomics identification</keyword>
<keyword id="KW-1185">Reference proteome</keyword>
<keyword id="KW-0677">Repeat</keyword>
<keyword id="KW-0832">Ubl conjugation</keyword>
<gene>
    <name evidence="36 38" type="primary">TOPBP1</name>
    <name evidence="35" type="synonym">KIAA0259</name>
</gene>
<comment type="function">
    <text evidence="2 6 7 8 9 11 13 14 16 19 24 25 26 27 28 29 30 31 32 33">Scaffold protein that acts as a key protein-protein adapter in DNA replication and DNA repair (PubMed:10498869, PubMed:11395493, PubMed:11714696, PubMed:17575048, PubMed:20545769, PubMed:21777809, PubMed:26811421, PubMed:30898438, PubMed:31135337, PubMed:33592542, PubMed:35597237, PubMed:37674080). Composed of multiple BRCT domains, which specifically recognize and bind phosphorylated proteins, bringing proteins together into functional combinations (PubMed:17575048, PubMed:20545769, PubMed:21777809, PubMed:26811421, PubMed:30898438, PubMed:31135337, PubMed:35597237, PubMed:37674080). Required for DNA replication initiation but not for the formation of pre-replicative complexes or the elongation stages (By similarity). Necessary for the loading of replication factors onto chromatin, including GMNC, CDC45, DNA polymerases and components of the GINS complex (By similarity). Plays a central role in DNA repair by bridging proteins and promoting recruitment of proteins to DNA damage sites (PubMed:30898438, PubMed:35597237, PubMed:37674080). Involved in double-strand break (DSB) repair via homologous recombination in S-phase by promoting the exchange between the DNA replication factor A (RPA) complex and RAD51 (PubMed:26811421, PubMed:35597237). Mechanistically, TOPBP1 is recruited to DNA damage sites in S-phase via interaction with phosphorylated HTATSF1, and promotes the loading of RAD51, thereby facilitating RAD51 nucleofilaments formation and RPA displacement, followed by homologous recombination (PubMed:35597237). Involved in microhomology-mediated end-joining (MMEJ) DNA repair by promoting recruitment of polymerase theta (POLQ) to DNA damage sites during mitosis (PubMed:37674080). MMEJ is an alternative non-homologous end-joining (NHEJ) machinery that takes place during mitosis to repair DSBs in DNA that originate in S-phase (PubMed:37674080). Recognizes and binds POLQ phosphorylated by PLK1, enabling its recruitment to DSBs for subsequent repair (PubMed:37674080). Involved in G1 DNA damage checkpoint by acting as a molecular adapter that couples TP53BP1 and the 9-1-1 complex (PubMed:31135337). In response to DNA damage, triggers the recruitment of checkpoint signaling proteins on chromatin, which activate the CHEK1 signaling pathway and block S-phase progression (PubMed:16530042, PubMed:21777809). Acts as an activator of the kinase activity of ATR (PubMed:16530042, PubMed:21777809). Also required for chromosomal stability when DSBs occur during mitosis by forming filamentous assemblies that bridge MDC1 and tether broken chromosomes during mitosis (PubMed:30898438). Together with CIP2A, plays an essential role in the response to genome instability generated by the presence of acentric chromosome fragments derived from shattered chromosomes within micronuclei (PubMed:35121901, PubMed:35842428, PubMed:37165191, PubMed:37316668). Micronuclei, which are frequently found in cancer cells, consist of chromatin surrounded by their own nuclear membrane: following breakdown of the micronuclear envelope, a process associated with chromothripsis, the CIP2A-TOPBP1 complex tethers chromosome fragments during mitosis to ensure clustered segregation of the fragments to a single daughter cell nucleus, facilitating re-ligation with limited chromosome scattering and loss (PubMed:37165191, PubMed:37316668). Recruits the SWI/SNF chromatin remodeling complex to E2F1-responsive promoters, thereby down-regulating E2F1 activity and inhibiting E2F1-dependent apoptosis during G1/S transition and after DNA damage (PubMed:12697828, PubMed:15075294).</text>
</comment>
<comment type="subunit">
    <text evidence="7 8 9 10 11 14 15 16 17 18 19 20 21 22 23 24 25 26 28 29 30 31 32 33 34">Interacts (via BRCT domains 1 and 2) with (phosphorylated) MDC1; promoting TOPBP1 recruitment to DNA damage sites during mitosis (PubMed:21482717, PubMed:23891287, PubMed:30898438). Interacts (via BRCT domains 7 and 8) with (autophosphorylated) ATR; promoting activation of ATR (PubMed:21777809). Interacts (via BRCT domains 7 and 8) with (phosphorylated) POLQ; specifically binds POLQ phosphorylated by PLK1, promoting POLQ recruitment to DNA damage sites (PubMed:37674080). Interacts (via BRCT domains 1 and 2) with (phosphorylated) RAD9A (PubMed:11395493, PubMed:17575048, PubMed:20545769). Interacts (via BRCT domain 2) with (phosphorylated) TP53BP1 (PubMed:31135337). Interacts (via BRCT domain 2) with (phosphorylated) HTATSF1 (PubMed:35597237). Interacts (via BRCT domains 7 and 8) with (phosphorylated) RAD51; promoting RAD51 recruitment to damaged chromatin (PubMed:26811421). Interacts with CIP2A; forming the CIP2A-TOPBP1 complex (PubMed:35121901, PubMed:35842428, PubMed:37165191, PubMed:37316668). Interacts with POLE (PubMed:11395493). Interacts with UBR5 (PubMed:11714696). Interacts with E2F1 (PubMed:12697828, PubMed:15075294). Interacts with PML (PubMed:12773567). Interacts with SMARCA2 (PubMed:15075294). Interacts with SMARCA4 (PubMed:15075294). Interacts with RHNO1 (PubMed:21659603, PubMed:25602520). May interact with TOP2B (PubMed:9461304). Interacts with TICRR (PubMed:20080954). Interacts with HELB (PubMed:25933514). Interacts (via residues 1233-1522) with RECQL4 (PubMed:22730300).</text>
</comment>
<comment type="interaction">
    <interactant intactId="EBI-308302">
        <id>Q92547</id>
    </interactant>
    <interactant intactId="EBI-296087">
        <id>P31749</id>
        <label>AKT1</label>
    </interactant>
    <organismsDiffer>false</organismsDiffer>
    <experiments>2</experiments>
</comment>
<comment type="interaction">
    <interactant intactId="EBI-308302">
        <id>Q92547</id>
    </interactant>
    <interactant intactId="EBI-374969">
        <id>O75419</id>
        <label>CDC45</label>
    </interactant>
    <organismsDiffer>false</organismsDiffer>
    <experiments>6</experiments>
</comment>
<comment type="interaction">
    <interactant intactId="EBI-308302">
        <id>Q92547</id>
    </interactant>
    <interactant intactId="EBI-448924">
        <id>Q01094</id>
        <label>E2F1</label>
    </interactant>
    <organismsDiffer>false</organismsDiffer>
    <experiments>3</experiments>
</comment>
<comment type="interaction">
    <interactant intactId="EBI-308302">
        <id>Q92547</id>
    </interactant>
    <interactant intactId="EBI-3444158">
        <id>Q9UGU0</id>
        <label>TCF20</label>
    </interactant>
    <organismsDiffer>false</organismsDiffer>
    <experiments>8</experiments>
</comment>
<comment type="interaction">
    <interactant intactId="EBI-308302">
        <id>Q92547</id>
    </interactant>
    <interactant intactId="EBI-308302">
        <id>Q92547</id>
        <label>TOPBP1</label>
    </interactant>
    <organismsDiffer>false</organismsDiffer>
    <experiments>5</experiments>
</comment>
<comment type="interaction">
    <interactant intactId="EBI-308302">
        <id>Q92547</id>
    </interactant>
    <interactant intactId="EBI-372156">
        <id>Q13105</id>
        <label>ZBTB17</label>
    </interactant>
    <organismsDiffer>false</organismsDiffer>
    <experiments>2</experiments>
</comment>
<comment type="interaction">
    <interactant intactId="EBI-308302">
        <id>Q92547</id>
    </interactant>
    <interactant intactId="EBI-1779322">
        <id>P03120</id>
        <label>E2</label>
    </interactant>
    <organismsDiffer>true</organismsDiffer>
    <experiments>2</experiments>
</comment>
<comment type="subcellular location">
    <subcellularLocation>
        <location evidence="7 9 10">Nucleus</location>
    </subcellularLocation>
    <subcellularLocation>
        <location evidence="6 7 8 12 17 18 19 24 25 28 29 30 32 33">Chromosome</location>
    </subcellularLocation>
    <subcellularLocation>
        <location evidence="12">Cytoplasm</location>
        <location evidence="12">Cytoskeleton</location>
        <location evidence="12">Microtubule organizing center</location>
        <location evidence="12">Centrosome</location>
    </subcellularLocation>
    <subcellularLocation>
        <location evidence="12">Cytoplasm</location>
        <location evidence="12">Cytoskeleton</location>
        <location evidence="12">Spindle pole</location>
    </subcellularLocation>
    <text evidence="1 6 7 10 17 18 19 25 28 29 30 31 32 33">Localizes to sites of DNA damage, such as double-stranded breaks (DSBs) (PubMed:10498869, PubMed:21482717, PubMed:21659603, PubMed:21777809, PubMed:30898438, PubMed:35842428, PubMed:37674080). Recruited to DNA double-strand break (DSBs) during S-phase following interaction with phosphorylated HTATSF1 (PubMed:35597237). Recruited to DSBs during mitosis following interaction with phosphorylated MDC1 (PubMed:30898438). Has a uniform nuclear distribution during G phase (PubMed:11395493). Colocalizes with BRCA1 at stalled replication forks during S phase (PubMed:11395493). In mitotic cells it colocalizes with BRCA1 at spindle poles and centrosomes during metaphase and anaphase (PubMed:11395493). Detected in discrete foci together with PML and numerous DNA repair enzymes after DNA damage by alkylating agents, UV or gamma irradiation (PubMed:12773567). Detected on unpaired autosomes in meiotic prophase cells (By similarity). Detected on X and Y chromosomes during later stages of prophase (By similarity). Colocalizes with ATR and H2AX at unsynapsed chromosome cores during prophase (By similarity). Localizes to broken chromosomes within micronuclei during interphase and following chromothripsis (PubMed:37165191, PubMed:37316668). Localization to broken chromosomes is mainly independent of MDC1 (PubMed:35121901, PubMed:37165191).</text>
</comment>
<comment type="tissue specificity">
    <text evidence="34">Highly expressed in heart, brain, placenta, lung and kidney.</text>
</comment>
<comment type="induction">
    <text evidence="10">Up-regulated during the S phase of the cell cycle. Up-regulated by E2F1 and interferon.</text>
</comment>
<comment type="domain">
    <text evidence="14 16 19 21 24 25 26 29 33">Some BRCT domains specifically recognize and bind phosphoserine/phosphothreonine marks on proteins (PubMed:17575048, PubMed:20545769, PubMed:21777809, PubMed:23891287, PubMed:30898438, PubMed:31135337, PubMed:35597237, PubMed:37674080). BRCT domains 1 and 2 bind phosphorylated MDC1 and RAD9A (PubMed:17575048, PubMed:20545769, PubMed:30898438). BRCT domain 2 binds phosphorylated HTATSF1 and TP53BP1 (PubMed:31135337, PubMed:35597237). BRCT domains 7 and 8 bind phosphorylated ATR, POLQ and RAD51 (PubMed:21777809, PubMed:26811421, PubMed:37674080).</text>
</comment>
<comment type="PTM">
    <text evidence="7 8">Phosphorylated on serine and threonine residues in response to X-ray irradiation.</text>
</comment>
<comment type="PTM">
    <text evidence="8 27">Ubiquitinated and degraded by the proteasome. X-ray irradiation reduces ubiquitination (PubMed:11714696). Deubiquitinated by USP13; leading to TOPBP1 stabilizion and activation of the ATR-TOPBP1 axis pathway (PubMed:33592542).</text>
</comment>
<comment type="similarity">
    <text evidence="37">Belongs to the TOPBP1 family.</text>
</comment>
<comment type="caution">
    <text evidence="21 25">Interaction with phosphorylated MDC1 was initially thought to be mediated by BRCT domains 4 and 5 (PubMed:23891287). However, it was later shown to be mainly mediated by BRCT domains 1 and 2 (PubMed:30898438).</text>
</comment>
<comment type="sequence caution" evidence="37">
    <conflict type="erroneous initiation">
        <sequence resource="EMBL-CDS" id="BAA13389"/>
    </conflict>
    <text>Extended N-terminus.</text>
</comment>
<comment type="sequence caution" evidence="37">
    <conflict type="erroneous initiation">
        <sequence resource="EMBL-CDS" id="BAA34202"/>
    </conflict>
    <text>Truncated N-terminus.</text>
</comment>
<evidence type="ECO:0000250" key="1">
    <source>
        <dbReference type="UniProtKB" id="Q6ZQF0"/>
    </source>
</evidence>
<evidence type="ECO:0000250" key="2">
    <source>
        <dbReference type="UniProtKB" id="Q800K6"/>
    </source>
</evidence>
<evidence type="ECO:0000255" key="3"/>
<evidence type="ECO:0000255" key="4">
    <source>
        <dbReference type="PROSITE-ProRule" id="PRU00033"/>
    </source>
</evidence>
<evidence type="ECO:0000256" key="5">
    <source>
        <dbReference type="SAM" id="MobiDB-lite"/>
    </source>
</evidence>
<evidence type="ECO:0000269" key="6">
    <source>
    </source>
</evidence>
<evidence type="ECO:0000269" key="7">
    <source>
    </source>
</evidence>
<evidence type="ECO:0000269" key="8">
    <source>
    </source>
</evidence>
<evidence type="ECO:0000269" key="9">
    <source>
    </source>
</evidence>
<evidence type="ECO:0000269" key="10">
    <source>
    </source>
</evidence>
<evidence type="ECO:0000269" key="11">
    <source>
    </source>
</evidence>
<evidence type="ECO:0000269" key="12">
    <source>
    </source>
</evidence>
<evidence type="ECO:0000269" key="13">
    <source>
    </source>
</evidence>
<evidence type="ECO:0000269" key="14">
    <source>
    </source>
</evidence>
<evidence type="ECO:0000269" key="15">
    <source>
    </source>
</evidence>
<evidence type="ECO:0000269" key="16">
    <source>
    </source>
</evidence>
<evidence type="ECO:0000269" key="17">
    <source>
    </source>
</evidence>
<evidence type="ECO:0000269" key="18">
    <source>
    </source>
</evidence>
<evidence type="ECO:0000269" key="19">
    <source>
    </source>
</evidence>
<evidence type="ECO:0000269" key="20">
    <source>
    </source>
</evidence>
<evidence type="ECO:0000269" key="21">
    <source>
    </source>
</evidence>
<evidence type="ECO:0000269" key="22">
    <source>
    </source>
</evidence>
<evidence type="ECO:0000269" key="23">
    <source>
    </source>
</evidence>
<evidence type="ECO:0000269" key="24">
    <source>
    </source>
</evidence>
<evidence type="ECO:0000269" key="25">
    <source>
    </source>
</evidence>
<evidence type="ECO:0000269" key="26">
    <source>
    </source>
</evidence>
<evidence type="ECO:0000269" key="27">
    <source>
    </source>
</evidence>
<evidence type="ECO:0000269" key="28">
    <source>
    </source>
</evidence>
<evidence type="ECO:0000269" key="29">
    <source>
    </source>
</evidence>
<evidence type="ECO:0000269" key="30">
    <source>
    </source>
</evidence>
<evidence type="ECO:0000269" key="31">
    <source>
    </source>
</evidence>
<evidence type="ECO:0000269" key="32">
    <source>
    </source>
</evidence>
<evidence type="ECO:0000269" key="33">
    <source>
    </source>
</evidence>
<evidence type="ECO:0000269" key="34">
    <source>
    </source>
</evidence>
<evidence type="ECO:0000303" key="35">
    <source>
    </source>
</evidence>
<evidence type="ECO:0000303" key="36">
    <source>
    </source>
</evidence>
<evidence type="ECO:0000305" key="37"/>
<evidence type="ECO:0000312" key="38">
    <source>
        <dbReference type="HGNC" id="HGNC:17008"/>
    </source>
</evidence>
<evidence type="ECO:0007744" key="39">
    <source>
        <dbReference type="PDB" id="3UEN"/>
    </source>
</evidence>
<evidence type="ECO:0007744" key="40">
    <source>
        <dbReference type="PDB" id="3UEO"/>
    </source>
</evidence>
<evidence type="ECO:0007744" key="41">
    <source>
        <dbReference type="PDB" id="6RML"/>
    </source>
</evidence>
<evidence type="ECO:0007744" key="42">
    <source>
        <dbReference type="PDB" id="6RMM"/>
    </source>
</evidence>
<evidence type="ECO:0007744" key="43">
    <source>
    </source>
</evidence>
<evidence type="ECO:0007744" key="44">
    <source>
    </source>
</evidence>
<evidence type="ECO:0007744" key="45">
    <source>
    </source>
</evidence>
<evidence type="ECO:0007744" key="46">
    <source>
    </source>
</evidence>
<evidence type="ECO:0007744" key="47">
    <source>
    </source>
</evidence>
<evidence type="ECO:0007744" key="48">
    <source>
    </source>
</evidence>
<evidence type="ECO:0007829" key="49">
    <source>
        <dbReference type="PDB" id="1WF6"/>
    </source>
</evidence>
<evidence type="ECO:0007829" key="50">
    <source>
        <dbReference type="PDB" id="2XNH"/>
    </source>
</evidence>
<evidence type="ECO:0007829" key="51">
    <source>
        <dbReference type="PDB" id="3OLC"/>
    </source>
</evidence>
<evidence type="ECO:0007829" key="52">
    <source>
        <dbReference type="PDB" id="3PD7"/>
    </source>
</evidence>
<evidence type="ECO:0007829" key="53">
    <source>
        <dbReference type="PDB" id="3UEN"/>
    </source>
</evidence>
<evidence type="ECO:0007829" key="54">
    <source>
        <dbReference type="PDB" id="6RML"/>
    </source>
</evidence>
<evidence type="ECO:0007829" key="55">
    <source>
        <dbReference type="PDB" id="7CMZ"/>
    </source>
</evidence>
<feature type="chain" id="PRO_0000072631" description="DNA topoisomerase 2-binding protein 1">
    <location>
        <begin position="1"/>
        <end position="1522"/>
    </location>
</feature>
<feature type="domain" description="BRCT 1" evidence="4">
    <location>
        <begin position="101"/>
        <end position="189"/>
    </location>
</feature>
<feature type="domain" description="BRCT 2" evidence="4">
    <location>
        <begin position="195"/>
        <end position="284"/>
    </location>
</feature>
<feature type="domain" description="BRCT 3" evidence="4">
    <location>
        <begin position="354"/>
        <end position="444"/>
    </location>
</feature>
<feature type="domain" description="BRCT 4" evidence="4">
    <location>
        <begin position="548"/>
        <end position="633"/>
    </location>
</feature>
<feature type="domain" description="BRCT 5" evidence="4">
    <location>
        <begin position="641"/>
        <end position="738"/>
    </location>
</feature>
<feature type="domain" description="BRCT 6" evidence="4">
    <location>
        <begin position="900"/>
        <end position="991"/>
    </location>
</feature>
<feature type="domain" description="BRCT 7" evidence="4">
    <location>
        <begin position="1259"/>
        <end position="1351"/>
    </location>
</feature>
<feature type="domain" description="BRCT 8" evidence="4">
    <location>
        <begin position="1389"/>
        <end position="1486"/>
    </location>
</feature>
<feature type="region of interest" description="Interaction with CIP2A" evidence="28 30">
    <location>
        <begin position="756"/>
        <end position="891"/>
    </location>
</feature>
<feature type="region of interest" description="Disordered" evidence="5">
    <location>
        <begin position="1018"/>
        <end position="1058"/>
    </location>
</feature>
<feature type="region of interest" description="Disordered" evidence="5">
    <location>
        <begin position="1083"/>
        <end position="1118"/>
    </location>
</feature>
<feature type="region of interest" description="Disordered" evidence="5">
    <location>
        <begin position="1501"/>
        <end position="1522"/>
    </location>
</feature>
<feature type="short sequence motif" description="Nuclear localization signal" evidence="3">
    <location>
        <begin position="852"/>
        <end position="858"/>
    </location>
</feature>
<feature type="short sequence motif" description="Nuclear localization signal" evidence="3">
    <location>
        <begin position="1517"/>
        <end position="1520"/>
    </location>
</feature>
<feature type="compositionally biased region" description="Acidic residues" evidence="5">
    <location>
        <begin position="1024"/>
        <end position="1036"/>
    </location>
</feature>
<feature type="compositionally biased region" description="Polar residues" evidence="5">
    <location>
        <begin position="1039"/>
        <end position="1058"/>
    </location>
</feature>
<feature type="compositionally biased region" description="Polar residues" evidence="5">
    <location>
        <begin position="1083"/>
        <end position="1114"/>
    </location>
</feature>
<feature type="modified residue" description="Phosphothreonine" evidence="48">
    <location>
        <position position="298"/>
    </location>
</feature>
<feature type="modified residue" description="Phosphoserine" evidence="44">
    <location>
        <position position="301"/>
    </location>
</feature>
<feature type="modified residue" description="Phosphothreonine" evidence="45 48">
    <location>
        <position position="779"/>
    </location>
</feature>
<feature type="modified residue" description="Phosphothreonine" evidence="45">
    <location>
        <position position="848"/>
    </location>
</feature>
<feature type="modified residue" description="Phosphoserine" evidence="48">
    <location>
        <position position="860"/>
    </location>
</feature>
<feature type="modified residue" description="Phosphothreonine" evidence="48">
    <location>
        <position position="861"/>
    </location>
</feature>
<feature type="modified residue" description="Phosphoserine" evidence="48">
    <location>
        <position position="864"/>
    </location>
</feature>
<feature type="modified residue" description="Phosphoserine" evidence="47">
    <location>
        <position position="886"/>
    </location>
</feature>
<feature type="modified residue" description="Phosphoserine" evidence="43 45 46 47 48">
    <location>
        <position position="888"/>
    </location>
</feature>
<feature type="modified residue" description="Phosphoserine" evidence="45">
    <location>
        <position position="1002"/>
    </location>
</feature>
<feature type="modified residue" description="Phosphothreonine" evidence="19">
    <location>
        <position position="1062"/>
    </location>
</feature>
<feature type="modified residue" description="Phosphothreonine" evidence="48">
    <location>
        <position position="1064"/>
    </location>
</feature>
<feature type="modified residue" description="Phosphoserine" evidence="48">
    <location>
        <position position="1504"/>
    </location>
</feature>
<feature type="sequence variant" id="VAR_059733" description="In dbSNP:rs17301766.">
    <original>S</original>
    <variation>L</variation>
    <location>
        <position position="817"/>
    </location>
</feature>
<feature type="sequence variant" id="VAR_057007" description="In dbSNP:rs10935070.">
    <original>N</original>
    <variation>S</variation>
    <location>
        <position position="955"/>
    </location>
</feature>
<feature type="sequence variant" id="VAR_059734" description="In dbSNP:rs10935070.">
    <original>N</original>
    <variation>S</variation>
    <location>
        <position position="1042"/>
    </location>
</feature>
<feature type="mutagenesis site" description="Impaired interaction with phosphorylated MDC1. Does not affect interaction with phosphorylated TP53BP1." evidence="25 26">
    <original>K</original>
    <variation>E</variation>
    <location>
        <position position="155"/>
    </location>
</feature>
<feature type="mutagenesis site" description="Abolished interaction with phosphorylated HTATSF1." evidence="29">
    <original>K</original>
    <variation>A</variation>
    <location>
        <position position="250"/>
    </location>
</feature>
<feature type="mutagenesis site" description="Abolished interaction with phosphorylated TP53BP1." evidence="26">
    <original>K</original>
    <variation>E</variation>
    <location>
        <position position="250"/>
    </location>
</feature>
<feature type="mutagenesis site" description="Does not affect interaction with MDC1." evidence="21">
    <original>S</original>
    <variation>A</variation>
    <location>
        <position position="564"/>
    </location>
</feature>
<feature type="mutagenesis site" description="Decreased interaction with MDC1." evidence="21">
    <original>RK</original>
    <variation>EE</variation>
    <location>
        <begin position="681"/>
        <end position="682"/>
    </location>
</feature>
<feature type="mutagenesis site" description="Decreased interaction with MDC1. Does not affect interaction with phosphorylated HTATSF1." evidence="21 29">
    <original>K</original>
    <variation>A</variation>
    <location>
        <position position="704"/>
    </location>
</feature>
<feature type="mutagenesis site" description="Decreased interaction with CIP2A." evidence="28">
    <original>FDV</original>
    <variation>AAA</variation>
    <location>
        <begin position="837"/>
        <end position="839"/>
    </location>
</feature>
<feature type="mutagenesis site" description="Decreased interaction with autophosphorylated ATR." evidence="19">
    <original>S</original>
    <variation>A</variation>
    <location>
        <position position="1273"/>
    </location>
</feature>
<feature type="mutagenesis site" description="Decreased interaction with autophosphorylated ATR." evidence="19">
    <original>R</original>
    <variation>Q</variation>
    <location>
        <position position="1280"/>
    </location>
</feature>
<feature type="mutagenesis site" description="Does not affect interaction with phosphorylated HTATSF1." evidence="29">
    <original>K</original>
    <variation>A</variation>
    <location>
        <position position="1317"/>
    </location>
</feature>
<feature type="mutagenesis site" description="Decreased interaction with autophosphorylated ATR." evidence="19">
    <original>K</original>
    <variation>M</variation>
    <location>
        <position position="1317"/>
    </location>
</feature>
<feature type="sequence conflict" description="In Ref. 1; BAA34202 and 2; BAA13389." evidence="37" ref="1 2">
    <original>K</original>
    <variation>Q</variation>
    <location>
        <position position="457"/>
    </location>
</feature>
<feature type="sequence conflict" description="In Ref. 3; BAH13754." evidence="37" ref="3">
    <original>C</original>
    <variation>R</variation>
    <location>
        <position position="911"/>
    </location>
</feature>
<feature type="strand" evidence="51">
    <location>
        <begin position="11"/>
        <end position="15"/>
    </location>
</feature>
<feature type="helix" evidence="51">
    <location>
        <begin position="21"/>
        <end position="33"/>
    </location>
</feature>
<feature type="helix" evidence="51">
    <location>
        <begin position="36"/>
        <end position="38"/>
    </location>
</feature>
<feature type="strand" evidence="51">
    <location>
        <begin position="39"/>
        <end position="43"/>
    </location>
</feature>
<feature type="helix" evidence="51">
    <location>
        <begin position="44"/>
        <end position="47"/>
    </location>
</feature>
<feature type="strand" evidence="51">
    <location>
        <begin position="57"/>
        <end position="59"/>
    </location>
</feature>
<feature type="strand" evidence="51">
    <location>
        <begin position="61"/>
        <end position="63"/>
    </location>
</feature>
<feature type="helix" evidence="51">
    <location>
        <begin position="66"/>
        <end position="74"/>
    </location>
</feature>
<feature type="strand" evidence="51">
    <location>
        <begin position="77"/>
        <end position="79"/>
    </location>
</feature>
<feature type="helix" evidence="51">
    <location>
        <begin position="81"/>
        <end position="89"/>
    </location>
</feature>
<feature type="turn" evidence="51">
    <location>
        <begin position="105"/>
        <end position="108"/>
    </location>
</feature>
<feature type="strand" evidence="51">
    <location>
        <begin position="110"/>
        <end position="115"/>
    </location>
</feature>
<feature type="helix" evidence="51">
    <location>
        <begin position="118"/>
        <end position="130"/>
    </location>
</feature>
<feature type="strand" evidence="51">
    <location>
        <begin position="145"/>
        <end position="151"/>
    </location>
</feature>
<feature type="helix" evidence="51">
    <location>
        <begin position="154"/>
        <end position="161"/>
    </location>
</feature>
<feature type="helix" evidence="51">
    <location>
        <begin position="169"/>
        <end position="180"/>
    </location>
</feature>
<feature type="turn" evidence="50">
    <location>
        <begin position="181"/>
        <end position="183"/>
    </location>
</feature>
<feature type="helix" evidence="51">
    <location>
        <begin position="187"/>
        <end position="189"/>
    </location>
</feature>
<feature type="helix" evidence="51">
    <location>
        <begin position="192"/>
        <end position="195"/>
    </location>
</feature>
<feature type="turn" evidence="51">
    <location>
        <begin position="199"/>
        <end position="202"/>
    </location>
</feature>
<feature type="strand" evidence="51">
    <location>
        <begin position="204"/>
        <end position="207"/>
    </location>
</feature>
<feature type="helix" evidence="51">
    <location>
        <begin position="212"/>
        <end position="224"/>
    </location>
</feature>
<feature type="strand" evidence="54">
    <location>
        <begin position="231"/>
        <end position="234"/>
    </location>
</feature>
<feature type="turn" evidence="51">
    <location>
        <begin position="235"/>
        <end position="237"/>
    </location>
</feature>
<feature type="strand" evidence="51">
    <location>
        <begin position="240"/>
        <end position="242"/>
    </location>
</feature>
<feature type="strand" evidence="51">
    <location>
        <begin position="244"/>
        <end position="246"/>
    </location>
</feature>
<feature type="helix" evidence="51">
    <location>
        <begin position="249"/>
        <end position="256"/>
    </location>
</feature>
<feature type="strand" evidence="51">
    <location>
        <begin position="260"/>
        <end position="262"/>
    </location>
</feature>
<feature type="helix" evidence="51">
    <location>
        <begin position="264"/>
        <end position="273"/>
    </location>
</feature>
<feature type="helix" evidence="51">
    <location>
        <begin position="279"/>
        <end position="281"/>
    </location>
</feature>
<feature type="strand" evidence="51">
    <location>
        <begin position="282"/>
        <end position="284"/>
    </location>
</feature>
<feature type="strand" evidence="49">
    <location>
        <begin position="333"/>
        <end position="335"/>
    </location>
</feature>
<feature type="helix" evidence="49">
    <location>
        <begin position="341"/>
        <end position="343"/>
    </location>
</feature>
<feature type="helix" evidence="49">
    <location>
        <begin position="349"/>
        <end position="351"/>
    </location>
</feature>
<feature type="turn" evidence="49">
    <location>
        <begin position="356"/>
        <end position="361"/>
    </location>
</feature>
<feature type="strand" evidence="49">
    <location>
        <begin position="363"/>
        <end position="368"/>
    </location>
</feature>
<feature type="helix" evidence="49">
    <location>
        <begin position="372"/>
        <end position="383"/>
    </location>
</feature>
<feature type="strand" evidence="49">
    <location>
        <begin position="387"/>
        <end position="391"/>
    </location>
</feature>
<feature type="strand" evidence="49">
    <location>
        <begin position="398"/>
        <end position="403"/>
    </location>
</feature>
<feature type="helix" evidence="49">
    <location>
        <begin position="407"/>
        <end position="414"/>
    </location>
</feature>
<feature type="strand" evidence="49">
    <location>
        <begin position="421"/>
        <end position="423"/>
    </location>
</feature>
<feature type="helix" evidence="49">
    <location>
        <begin position="424"/>
        <end position="433"/>
    </location>
</feature>
<feature type="helix" evidence="49">
    <location>
        <begin position="440"/>
        <end position="442"/>
    </location>
</feature>
<feature type="turn" evidence="53">
    <location>
        <begin position="552"/>
        <end position="555"/>
    </location>
</feature>
<feature type="strand" evidence="53">
    <location>
        <begin position="557"/>
        <end position="560"/>
    </location>
</feature>
<feature type="helix" evidence="53">
    <location>
        <begin position="565"/>
        <end position="577"/>
    </location>
</feature>
<feature type="strand" evidence="53">
    <location>
        <begin position="591"/>
        <end position="596"/>
    </location>
</feature>
<feature type="strand" evidence="53">
    <location>
        <begin position="607"/>
        <end position="612"/>
    </location>
</feature>
<feature type="helix" evidence="53">
    <location>
        <begin position="613"/>
        <end position="621"/>
    </location>
</feature>
<feature type="helix" evidence="53">
    <location>
        <begin position="628"/>
        <end position="630"/>
    </location>
</feature>
<feature type="helix" evidence="53">
    <location>
        <begin position="632"/>
        <end position="634"/>
    </location>
</feature>
<feature type="turn" evidence="53">
    <location>
        <begin position="645"/>
        <end position="648"/>
    </location>
</feature>
<feature type="strand" evidence="53">
    <location>
        <begin position="650"/>
        <end position="653"/>
    </location>
</feature>
<feature type="helix" evidence="53">
    <location>
        <begin position="658"/>
        <end position="670"/>
    </location>
</feature>
<feature type="turn" evidence="53">
    <location>
        <begin position="685"/>
        <end position="688"/>
    </location>
</feature>
<feature type="strand" evidence="53">
    <location>
        <begin position="693"/>
        <end position="696"/>
    </location>
</feature>
<feature type="strand" evidence="53">
    <location>
        <begin position="698"/>
        <end position="700"/>
    </location>
</feature>
<feature type="helix" evidence="53">
    <location>
        <begin position="703"/>
        <end position="710"/>
    </location>
</feature>
<feature type="helix" evidence="53">
    <location>
        <begin position="718"/>
        <end position="727"/>
    </location>
</feature>
<feature type="helix" evidence="53">
    <location>
        <begin position="733"/>
        <end position="735"/>
    </location>
</feature>
<feature type="helix" evidence="53">
    <location>
        <begin position="738"/>
        <end position="740"/>
    </location>
</feature>
<feature type="turn" evidence="52">
    <location>
        <begin position="904"/>
        <end position="907"/>
    </location>
</feature>
<feature type="strand" evidence="52">
    <location>
        <begin position="909"/>
        <end position="912"/>
    </location>
</feature>
<feature type="helix" evidence="52">
    <location>
        <begin position="914"/>
        <end position="919"/>
    </location>
</feature>
<feature type="helix" evidence="52">
    <location>
        <begin position="920"/>
        <end position="929"/>
    </location>
</feature>
<feature type="strand" evidence="52">
    <location>
        <begin position="933"/>
        <end position="937"/>
    </location>
</feature>
<feature type="strand" evidence="52">
    <location>
        <begin position="943"/>
        <end position="946"/>
    </location>
</feature>
<feature type="helix" evidence="52">
    <location>
        <begin position="956"/>
        <end position="963"/>
    </location>
</feature>
<feature type="strand" evidence="52">
    <location>
        <begin position="967"/>
        <end position="969"/>
    </location>
</feature>
<feature type="helix" evidence="52">
    <location>
        <begin position="971"/>
        <end position="980"/>
    </location>
</feature>
<feature type="helix" evidence="52">
    <location>
        <begin position="986"/>
        <end position="988"/>
    </location>
</feature>
<feature type="strand" evidence="55">
    <location>
        <begin position="1269"/>
        <end position="1274"/>
    </location>
</feature>
<feature type="helix" evidence="55">
    <location>
        <begin position="1277"/>
        <end position="1289"/>
    </location>
</feature>
<feature type="strand" evidence="55">
    <location>
        <begin position="1297"/>
        <end position="1299"/>
    </location>
</feature>
<feature type="strand" evidence="55">
    <location>
        <begin position="1305"/>
        <end position="1311"/>
    </location>
</feature>
<feature type="helix" evidence="55">
    <location>
        <begin position="1316"/>
        <end position="1323"/>
    </location>
</feature>
<feature type="strand" evidence="55">
    <location>
        <begin position="1327"/>
        <end position="1329"/>
    </location>
</feature>
<feature type="helix" evidence="55">
    <location>
        <begin position="1332"/>
        <end position="1340"/>
    </location>
</feature>
<feature type="helix" evidence="55">
    <location>
        <begin position="1347"/>
        <end position="1349"/>
    </location>
</feature>
<feature type="helix" evidence="55">
    <location>
        <begin position="1354"/>
        <end position="1359"/>
    </location>
</feature>
<feature type="helix" evidence="55">
    <location>
        <begin position="1365"/>
        <end position="1386"/>
    </location>
</feature>
<feature type="turn" evidence="55">
    <location>
        <begin position="1393"/>
        <end position="1396"/>
    </location>
</feature>
<feature type="strand" evidence="55">
    <location>
        <begin position="1398"/>
        <end position="1402"/>
    </location>
</feature>
<feature type="helix" evidence="55">
    <location>
        <begin position="1405"/>
        <end position="1417"/>
    </location>
</feature>
<feature type="helix" evidence="55">
    <location>
        <begin position="1428"/>
        <end position="1431"/>
    </location>
</feature>
<feature type="strand" evidence="55">
    <location>
        <begin position="1435"/>
        <end position="1439"/>
    </location>
</feature>
<feature type="helix" evidence="55">
    <location>
        <begin position="1453"/>
        <end position="1458"/>
    </location>
</feature>
<feature type="strand" evidence="55">
    <location>
        <begin position="1462"/>
        <end position="1465"/>
    </location>
</feature>
<feature type="helix" evidence="55">
    <location>
        <begin position="1467"/>
        <end position="1474"/>
    </location>
</feature>
<feature type="strand" evidence="55">
    <location>
        <begin position="1475"/>
        <end position="1477"/>
    </location>
</feature>
<feature type="helix" evidence="55">
    <location>
        <begin position="1481"/>
        <end position="1483"/>
    </location>
</feature>
<feature type="helix" evidence="55">
    <location>
        <begin position="1487"/>
        <end position="1489"/>
    </location>
</feature>
<reference key="1">
    <citation type="journal article" date="1997" name="Eur. J. Biochem.">
        <title>A DNA topoisomerase II binding protein with eight repeating regions similar to DNA repair enzymes and to a cell cycle regulator.</title>
        <authorList>
            <person name="Yamane K."/>
            <person name="Kawabata M."/>
            <person name="Tsuruo T."/>
        </authorList>
    </citation>
    <scope>NUCLEOTIDE SEQUENCE [MRNA]</scope>
    <scope>INTERACTION WITH TOP2B</scope>
    <scope>TISSUE SPECIFICITY</scope>
    <source>
        <tissue>Cervix carcinoma</tissue>
    </source>
</reference>
<reference key="2">
    <citation type="journal article" date="1996" name="DNA Res.">
        <title>Prediction of the coding sequences of unidentified human genes. VI. The coding sequences of 80 new genes (KIAA0201-KIAA0280) deduced by analysis of cDNA clones from cell line KG-1 and brain.</title>
        <authorList>
            <person name="Nagase T."/>
            <person name="Seki N."/>
            <person name="Ishikawa K."/>
            <person name="Ohira M."/>
            <person name="Kawarabayasi Y."/>
            <person name="Ohara O."/>
            <person name="Tanaka A."/>
            <person name="Kotani H."/>
            <person name="Miyajima N."/>
            <person name="Nomura N."/>
        </authorList>
    </citation>
    <scope>NUCLEOTIDE SEQUENCE [LARGE SCALE MRNA]</scope>
    <source>
        <tissue>Bone marrow</tissue>
    </source>
</reference>
<reference key="3">
    <citation type="journal article" date="2004" name="Nat. Genet.">
        <title>Complete sequencing and characterization of 21,243 full-length human cDNAs.</title>
        <authorList>
            <person name="Ota T."/>
            <person name="Suzuki Y."/>
            <person name="Nishikawa T."/>
            <person name="Otsuki T."/>
            <person name="Sugiyama T."/>
            <person name="Irie R."/>
            <person name="Wakamatsu A."/>
            <person name="Hayashi K."/>
            <person name="Sato H."/>
            <person name="Nagai K."/>
            <person name="Kimura K."/>
            <person name="Makita H."/>
            <person name="Sekine M."/>
            <person name="Obayashi M."/>
            <person name="Nishi T."/>
            <person name="Shibahara T."/>
            <person name="Tanaka T."/>
            <person name="Ishii S."/>
            <person name="Yamamoto J."/>
            <person name="Saito K."/>
            <person name="Kawai Y."/>
            <person name="Isono Y."/>
            <person name="Nakamura Y."/>
            <person name="Nagahari K."/>
            <person name="Murakami K."/>
            <person name="Yasuda T."/>
            <person name="Iwayanagi T."/>
            <person name="Wagatsuma M."/>
            <person name="Shiratori A."/>
            <person name="Sudo H."/>
            <person name="Hosoiri T."/>
            <person name="Kaku Y."/>
            <person name="Kodaira H."/>
            <person name="Kondo H."/>
            <person name="Sugawara M."/>
            <person name="Takahashi M."/>
            <person name="Kanda K."/>
            <person name="Yokoi T."/>
            <person name="Furuya T."/>
            <person name="Kikkawa E."/>
            <person name="Omura Y."/>
            <person name="Abe K."/>
            <person name="Kamihara K."/>
            <person name="Katsuta N."/>
            <person name="Sato K."/>
            <person name="Tanikawa M."/>
            <person name="Yamazaki M."/>
            <person name="Ninomiya K."/>
            <person name="Ishibashi T."/>
            <person name="Yamashita H."/>
            <person name="Murakawa K."/>
            <person name="Fujimori K."/>
            <person name="Tanai H."/>
            <person name="Kimata M."/>
            <person name="Watanabe M."/>
            <person name="Hiraoka S."/>
            <person name="Chiba Y."/>
            <person name="Ishida S."/>
            <person name="Ono Y."/>
            <person name="Takiguchi S."/>
            <person name="Watanabe S."/>
            <person name="Yosida M."/>
            <person name="Hotuta T."/>
            <person name="Kusano J."/>
            <person name="Kanehori K."/>
            <person name="Takahashi-Fujii A."/>
            <person name="Hara H."/>
            <person name="Tanase T.-O."/>
            <person name="Nomura Y."/>
            <person name="Togiya S."/>
            <person name="Komai F."/>
            <person name="Hara R."/>
            <person name="Takeuchi K."/>
            <person name="Arita M."/>
            <person name="Imose N."/>
            <person name="Musashino K."/>
            <person name="Yuuki H."/>
            <person name="Oshima A."/>
            <person name="Sasaki N."/>
            <person name="Aotsuka S."/>
            <person name="Yoshikawa Y."/>
            <person name="Matsunawa H."/>
            <person name="Ichihara T."/>
            <person name="Shiohata N."/>
            <person name="Sano S."/>
            <person name="Moriya S."/>
            <person name="Momiyama H."/>
            <person name="Satoh N."/>
            <person name="Takami S."/>
            <person name="Terashima Y."/>
            <person name="Suzuki O."/>
            <person name="Nakagawa S."/>
            <person name="Senoh A."/>
            <person name="Mizoguchi H."/>
            <person name="Goto Y."/>
            <person name="Shimizu F."/>
            <person name="Wakebe H."/>
            <person name="Hishigaki H."/>
            <person name="Watanabe T."/>
            <person name="Sugiyama A."/>
            <person name="Takemoto M."/>
            <person name="Kawakami B."/>
            <person name="Yamazaki M."/>
            <person name="Watanabe K."/>
            <person name="Kumagai A."/>
            <person name="Itakura S."/>
            <person name="Fukuzumi Y."/>
            <person name="Fujimori Y."/>
            <person name="Komiyama M."/>
            <person name="Tashiro H."/>
            <person name="Tanigami A."/>
            <person name="Fujiwara T."/>
            <person name="Ono T."/>
            <person name="Yamada K."/>
            <person name="Fujii Y."/>
            <person name="Ozaki K."/>
            <person name="Hirao M."/>
            <person name="Ohmori Y."/>
            <person name="Kawabata A."/>
            <person name="Hikiji T."/>
            <person name="Kobatake N."/>
            <person name="Inagaki H."/>
            <person name="Ikema Y."/>
            <person name="Okamoto S."/>
            <person name="Okitani R."/>
            <person name="Kawakami T."/>
            <person name="Noguchi S."/>
            <person name="Itoh T."/>
            <person name="Shigeta K."/>
            <person name="Senba T."/>
            <person name="Matsumura K."/>
            <person name="Nakajima Y."/>
            <person name="Mizuno T."/>
            <person name="Morinaga M."/>
            <person name="Sasaki M."/>
            <person name="Togashi T."/>
            <person name="Oyama M."/>
            <person name="Hata H."/>
            <person name="Watanabe M."/>
            <person name="Komatsu T."/>
            <person name="Mizushima-Sugano J."/>
            <person name="Satoh T."/>
            <person name="Shirai Y."/>
            <person name="Takahashi Y."/>
            <person name="Nakagawa K."/>
            <person name="Okumura K."/>
            <person name="Nagase T."/>
            <person name="Nomura N."/>
            <person name="Kikuchi H."/>
            <person name="Masuho Y."/>
            <person name="Yamashita R."/>
            <person name="Nakai K."/>
            <person name="Yada T."/>
            <person name="Nakamura Y."/>
            <person name="Ohara O."/>
            <person name="Isogai T."/>
            <person name="Sugano S."/>
        </authorList>
    </citation>
    <scope>NUCLEOTIDE SEQUENCE [LARGE SCALE MRNA]</scope>
    <source>
        <tissue>Testis</tissue>
    </source>
</reference>
<reference key="4">
    <citation type="journal article" date="2006" name="Nature">
        <title>The DNA sequence, annotation and analysis of human chromosome 3.</title>
        <authorList>
            <person name="Muzny D.M."/>
            <person name="Scherer S.E."/>
            <person name="Kaul R."/>
            <person name="Wang J."/>
            <person name="Yu J."/>
            <person name="Sudbrak R."/>
            <person name="Buhay C.J."/>
            <person name="Chen R."/>
            <person name="Cree A."/>
            <person name="Ding Y."/>
            <person name="Dugan-Rocha S."/>
            <person name="Gill R."/>
            <person name="Gunaratne P."/>
            <person name="Harris R.A."/>
            <person name="Hawes A.C."/>
            <person name="Hernandez J."/>
            <person name="Hodgson A.V."/>
            <person name="Hume J."/>
            <person name="Jackson A."/>
            <person name="Khan Z.M."/>
            <person name="Kovar-Smith C."/>
            <person name="Lewis L.R."/>
            <person name="Lozado R.J."/>
            <person name="Metzker M.L."/>
            <person name="Milosavljevic A."/>
            <person name="Miner G.R."/>
            <person name="Morgan M.B."/>
            <person name="Nazareth L.V."/>
            <person name="Scott G."/>
            <person name="Sodergren E."/>
            <person name="Song X.-Z."/>
            <person name="Steffen D."/>
            <person name="Wei S."/>
            <person name="Wheeler D.A."/>
            <person name="Wright M.W."/>
            <person name="Worley K.C."/>
            <person name="Yuan Y."/>
            <person name="Zhang Z."/>
            <person name="Adams C.Q."/>
            <person name="Ansari-Lari M.A."/>
            <person name="Ayele M."/>
            <person name="Brown M.J."/>
            <person name="Chen G."/>
            <person name="Chen Z."/>
            <person name="Clendenning J."/>
            <person name="Clerc-Blankenburg K.P."/>
            <person name="Chen R."/>
            <person name="Chen Z."/>
            <person name="Davis C."/>
            <person name="Delgado O."/>
            <person name="Dinh H.H."/>
            <person name="Dong W."/>
            <person name="Draper H."/>
            <person name="Ernst S."/>
            <person name="Fu G."/>
            <person name="Gonzalez-Garay M.L."/>
            <person name="Garcia D.K."/>
            <person name="Gillett W."/>
            <person name="Gu J."/>
            <person name="Hao B."/>
            <person name="Haugen E."/>
            <person name="Havlak P."/>
            <person name="He X."/>
            <person name="Hennig S."/>
            <person name="Hu S."/>
            <person name="Huang W."/>
            <person name="Jackson L.R."/>
            <person name="Jacob L.S."/>
            <person name="Kelly S.H."/>
            <person name="Kube M."/>
            <person name="Levy R."/>
            <person name="Li Z."/>
            <person name="Liu B."/>
            <person name="Liu J."/>
            <person name="Liu W."/>
            <person name="Lu J."/>
            <person name="Maheshwari M."/>
            <person name="Nguyen B.-V."/>
            <person name="Okwuonu G.O."/>
            <person name="Palmeiri A."/>
            <person name="Pasternak S."/>
            <person name="Perez L.M."/>
            <person name="Phelps K.A."/>
            <person name="Plopper F.J."/>
            <person name="Qiang B."/>
            <person name="Raymond C."/>
            <person name="Rodriguez R."/>
            <person name="Saenphimmachak C."/>
            <person name="Santibanez J."/>
            <person name="Shen H."/>
            <person name="Shen Y."/>
            <person name="Subramanian S."/>
            <person name="Tabor P.E."/>
            <person name="Verduzco D."/>
            <person name="Waldron L."/>
            <person name="Wang J."/>
            <person name="Wang J."/>
            <person name="Wang Q."/>
            <person name="Williams G.A."/>
            <person name="Wong G.K.-S."/>
            <person name="Yao Z."/>
            <person name="Zhang J."/>
            <person name="Zhang X."/>
            <person name="Zhao G."/>
            <person name="Zhou J."/>
            <person name="Zhou Y."/>
            <person name="Nelson D."/>
            <person name="Lehrach H."/>
            <person name="Reinhardt R."/>
            <person name="Naylor S.L."/>
            <person name="Yang H."/>
            <person name="Olson M."/>
            <person name="Weinstock G."/>
            <person name="Gibbs R.A."/>
        </authorList>
    </citation>
    <scope>NUCLEOTIDE SEQUENCE [LARGE SCALE GENOMIC DNA]</scope>
</reference>
<reference key="5">
    <citation type="journal article" date="1999" name="Oncogene">
        <title>Conserved BRCT regions of TopBP1 and of the tumor suppressor BRCA1 bind strand breaks and termini of DNA.</title>
        <authorList>
            <person name="Yamane K."/>
            <person name="Tsuruo T."/>
        </authorList>
    </citation>
    <scope>FUNCTION</scope>
    <scope>SUBCELLULAR LOCATION</scope>
</reference>
<reference key="6">
    <citation type="journal article" date="2001" name="J. Biol. Chem.">
        <title>BRCT domain-containing protein TopBP1 functions in DNA replication and damage response.</title>
        <authorList>
            <person name="Maekiniemi M."/>
            <person name="Hillukkala T."/>
            <person name="Tuusa J."/>
            <person name="Reini K."/>
            <person name="Vaara M."/>
            <person name="Huang D."/>
            <person name="Pospiech H."/>
            <person name="Majuri I."/>
            <person name="Westerling T."/>
            <person name="Maekelae T.P."/>
            <person name="Syvaeoja J.E."/>
        </authorList>
    </citation>
    <scope>FUNCTION</scope>
    <scope>PHOSPHORYLATION</scope>
    <scope>SUBCELLULAR LOCATION</scope>
    <scope>INTERACTION WITH POLE AND RAD9A</scope>
</reference>
<reference key="7">
    <citation type="journal article" date="2002" name="J. Biol. Chem.">
        <title>Cooperation of HECT-domain ubiquitin ligase hHYD and DNA topoisomerase II-binding protein for DNA damage response.</title>
        <authorList>
            <person name="Honda Y."/>
            <person name="Tojo M."/>
            <person name="Matsuzaki K."/>
            <person name="Anan T."/>
            <person name="Matsumoto M."/>
            <person name="Ando M."/>
            <person name="Saya H."/>
            <person name="Nakao M."/>
        </authorList>
    </citation>
    <scope>FUNCTION</scope>
    <scope>PHOSPHORYLATION</scope>
    <scope>INTERACTION WITH UBR5</scope>
    <scope>UBIQUITINATION</scope>
    <scope>PROTEASOME-MEDIATED DEGRADATION</scope>
    <scope>SUBCELLULAR LOCATION</scope>
</reference>
<reference key="8">
    <citation type="journal article" date="2003" name="Mol. Cell. Biol.">
        <title>Regulation of E2F1 by BRCT domain-containing protein TopBP1.</title>
        <authorList>
            <person name="Liu K."/>
            <person name="Lin F.-T."/>
            <person name="Ruppert J.M."/>
            <person name="Lin W.-C."/>
        </authorList>
    </citation>
    <scope>FUNCTION</scope>
    <scope>SUBCELLULAR LOCATION</scope>
    <scope>INTERACTION WITH E2F1</scope>
</reference>
<reference key="9">
    <citation type="journal article" date="2003" name="Mol. Cell. Biol.">
        <title>PML colocalizes with and stabilizes the DNA damage response protein TopBP1.</title>
        <authorList>
            <person name="Xu Z.-X."/>
            <person name="Timanova-Atanasova A."/>
            <person name="Zhao R.-X."/>
            <person name="Chang K.-S."/>
        </authorList>
    </citation>
    <scope>INDUCTION</scope>
    <scope>SUBCELLULAR LOCATION</scope>
    <scope>INTERACTION WITH PML</scope>
</reference>
<reference key="10">
    <citation type="journal article" date="2004" name="Chromosoma">
        <title>TopBP1 localises to centrosomes in mitosis and to chromosome cores in meiosis.</title>
        <authorList>
            <person name="Reini K."/>
            <person name="Uitto L."/>
            <person name="Perera D."/>
            <person name="Moens P.B."/>
            <person name="Freire R."/>
            <person name="Syvaeoja J.E."/>
        </authorList>
    </citation>
    <scope>SUBCELLULAR LOCATION</scope>
</reference>
<reference key="11">
    <citation type="journal article" date="2004" name="Genes Dev.">
        <title>TopBP1 recruits Brg1/Brm to repress E2F1-induced apoptosis, a novel pRb-independent and E2F1-specific control for cell survival.</title>
        <authorList>
            <person name="Liu K."/>
            <person name="Luo Y."/>
            <person name="Lin F.-T."/>
            <person name="Lin W.-C."/>
        </authorList>
    </citation>
    <scope>FUNCTION</scope>
    <scope>INTERACTION WITH E2F1; SMARCA2; SMARCA4 AND THE SWI/SNF CHROMATIN REMODELING COMPLEX</scope>
</reference>
<reference key="12">
    <citation type="journal article" date="2006" name="Cell">
        <title>TopBP1 activates the ATR-ATRIP complex.</title>
        <authorList>
            <person name="Kumagai A."/>
            <person name="Lee J."/>
            <person name="Yoo H.Y."/>
            <person name="Dunphy W.G."/>
        </authorList>
    </citation>
    <scope>FUNCTION</scope>
</reference>
<reference key="13">
    <citation type="journal article" date="2006" name="Nat. Biotechnol.">
        <title>A probability-based approach for high-throughput protein phosphorylation analysis and site localization.</title>
        <authorList>
            <person name="Beausoleil S.A."/>
            <person name="Villen J."/>
            <person name="Gerber S.A."/>
            <person name="Rush J."/>
            <person name="Gygi S.P."/>
        </authorList>
    </citation>
    <scope>PHOSPHORYLATION [LARGE SCALE ANALYSIS] AT SER-888</scope>
    <scope>IDENTIFICATION BY MASS SPECTROMETRY [LARGE SCALE ANALYSIS]</scope>
    <source>
        <tissue>Cervix carcinoma</tissue>
    </source>
</reference>
<reference key="14">
    <citation type="journal article" date="2007" name="Genes Dev.">
        <title>The Rad9-Hus1-Rad1 (9-1-1) clamp activates checkpoint signaling via TopBP1.</title>
        <authorList>
            <person name="Delacroix S."/>
            <person name="Wagner J.M."/>
            <person name="Kobayashi M."/>
            <person name="Yamamoto K."/>
            <person name="Karnitz L.M."/>
        </authorList>
    </citation>
    <scope>FUNCTION</scope>
    <scope>INTERACTION WITH RAD9A</scope>
    <scope>DOMAIN</scope>
</reference>
<reference key="15">
    <citation type="journal article" date="2007" name="Science">
        <title>ATM and ATR substrate analysis reveals extensive protein networks responsive to DNA damage.</title>
        <authorList>
            <person name="Matsuoka S."/>
            <person name="Ballif B.A."/>
            <person name="Smogorzewska A."/>
            <person name="McDonald E.R. III"/>
            <person name="Hurov K.E."/>
            <person name="Luo J."/>
            <person name="Bakalarski C.E."/>
            <person name="Zhao Z."/>
            <person name="Solimini N."/>
            <person name="Lerenthal Y."/>
            <person name="Shiloh Y."/>
            <person name="Gygi S.P."/>
            <person name="Elledge S.J."/>
        </authorList>
    </citation>
    <scope>PHOSPHORYLATION [LARGE SCALE ANALYSIS] AT SER-301</scope>
    <scope>IDENTIFICATION BY MASS SPECTROMETRY [LARGE SCALE ANALYSIS]</scope>
    <source>
        <tissue>Embryonic kidney</tissue>
    </source>
</reference>
<reference key="16">
    <citation type="journal article" date="2008" name="Proc. Natl. Acad. Sci. U.S.A.">
        <title>A quantitative atlas of mitotic phosphorylation.</title>
        <authorList>
            <person name="Dephoure N."/>
            <person name="Zhou C."/>
            <person name="Villen J."/>
            <person name="Beausoleil S.A."/>
            <person name="Bakalarski C.E."/>
            <person name="Elledge S.J."/>
            <person name="Gygi S.P."/>
        </authorList>
    </citation>
    <scope>PHOSPHORYLATION [LARGE SCALE ANALYSIS] AT THR-779; THR-848; SER-888 AND SER-1002</scope>
    <scope>IDENTIFICATION BY MASS SPECTROMETRY [LARGE SCALE ANALYSIS]</scope>
    <source>
        <tissue>Cervix carcinoma</tissue>
    </source>
</reference>
<reference key="17">
    <citation type="journal article" date="2009" name="Sci. Signal.">
        <title>Quantitative phosphoproteomic analysis of T cell receptor signaling reveals system-wide modulation of protein-protein interactions.</title>
        <authorList>
            <person name="Mayya V."/>
            <person name="Lundgren D.H."/>
            <person name="Hwang S.-I."/>
            <person name="Rezaul K."/>
            <person name="Wu L."/>
            <person name="Eng J.K."/>
            <person name="Rodionov V."/>
            <person name="Han D.K."/>
        </authorList>
    </citation>
    <scope>PHOSPHORYLATION [LARGE SCALE ANALYSIS] AT SER-888</scope>
    <scope>IDENTIFICATION BY MASS SPECTROMETRY [LARGE SCALE ANALYSIS]</scope>
    <source>
        <tissue>Leukemic T-cell</tissue>
    </source>
</reference>
<reference key="18">
    <citation type="journal article" date="2010" name="Genes Cells">
        <title>Casein kinase 2-dependent phosphorylation of human Rad9 mediates the interaction between human Rad9-Hus1-Rad1 complex and TopBP1.</title>
        <authorList>
            <person name="Takeishi Y."/>
            <person name="Ohashi E."/>
            <person name="Ogawa K."/>
            <person name="Masai H."/>
            <person name="Obuse C."/>
            <person name="Tsurimoto T."/>
        </authorList>
    </citation>
    <scope>FUNCTION</scope>
    <scope>INTERACTION WITH RAD9A</scope>
</reference>
<reference key="19">
    <citation type="journal article" date="2010" name="Genes Dev.">
        <title>A vertebrate gene, ticrr, is an essential checkpoint and replication regulator.</title>
        <authorList>
            <person name="Sansam C.L."/>
            <person name="Cruz N.M."/>
            <person name="Danielian P.S."/>
            <person name="Amsterdam A."/>
            <person name="Lau M.L."/>
            <person name="Hopkins N."/>
            <person name="Lees J.A."/>
        </authorList>
    </citation>
    <scope>INTERACTION WITH TICRR</scope>
</reference>
<reference key="20">
    <citation type="journal article" date="2010" name="Sci. Signal.">
        <title>Quantitative phosphoproteomics reveals widespread full phosphorylation site occupancy during mitosis.</title>
        <authorList>
            <person name="Olsen J.V."/>
            <person name="Vermeulen M."/>
            <person name="Santamaria A."/>
            <person name="Kumar C."/>
            <person name="Miller M.L."/>
            <person name="Jensen L.J."/>
            <person name="Gnad F."/>
            <person name="Cox J."/>
            <person name="Jensen T.S."/>
            <person name="Nigg E.A."/>
            <person name="Brunak S."/>
            <person name="Mann M."/>
        </authorList>
    </citation>
    <scope>PHOSPHORYLATION [LARGE SCALE ANALYSIS] AT SER-886 AND SER-888</scope>
    <scope>IDENTIFICATION BY MASS SPECTROMETRY [LARGE SCALE ANALYSIS]</scope>
    <source>
        <tissue>Cervix carcinoma</tissue>
    </source>
</reference>
<reference key="21">
    <citation type="journal article" date="2011" name="BMC Syst. Biol.">
        <title>Initial characterization of the human central proteome.</title>
        <authorList>
            <person name="Burkard T.R."/>
            <person name="Planyavsky M."/>
            <person name="Kaupe I."/>
            <person name="Breitwieser F.P."/>
            <person name="Buerckstuemmer T."/>
            <person name="Bennett K.L."/>
            <person name="Superti-Furga G."/>
            <person name="Colinge J."/>
        </authorList>
    </citation>
    <scope>IDENTIFICATION BY MASS SPECTROMETRY [LARGE SCALE ANALYSIS]</scope>
</reference>
<reference key="22">
    <citation type="journal article" date="2011" name="J. Cell Biol.">
        <title>MDC1 collaborates with TopBP1 in DNA replication checkpoint control.</title>
        <authorList>
            <person name="Wang J."/>
            <person name="Gong Z."/>
            <person name="Chen J."/>
        </authorList>
    </citation>
    <scope>SUBCELLULAR LOCATION</scope>
    <scope>INTERACTION WITH MDC1</scope>
</reference>
<reference key="23">
    <citation type="journal article" date="2011" name="Mol. Cell">
        <title>ATR autophosphorylation as a molecular switch for checkpoint activation.</title>
        <authorList>
            <person name="Liu S."/>
            <person name="Shiotani B."/>
            <person name="Lahiri M."/>
            <person name="Marechal A."/>
            <person name="Tse A."/>
            <person name="Leung C.C."/>
            <person name="Glover J.N."/>
            <person name="Yang X.H."/>
            <person name="Zou L."/>
        </authorList>
    </citation>
    <scope>FUNCTION</scope>
    <scope>SUBCELLULAR LOCATION</scope>
    <scope>INTERACTION WITH ATR</scope>
    <scope>PHOSPHORYLATION AT THR-1062</scope>
    <scope>MUTAGENESIS OF SER-1273; ARG-1280 AND LYS-1317</scope>
</reference>
<reference key="24">
    <citation type="journal article" date="2011" name="Science">
        <title>A DNA damage response screen identifies RHINO, a 9-1-1 and TopBP1 interacting protein required for ATR signaling.</title>
        <authorList>
            <person name="Cotta-Ramusino C."/>
            <person name="McDonald E.R. III"/>
            <person name="Hurov K."/>
            <person name="Sowa M.E."/>
            <person name="Harper J.W."/>
            <person name="Elledge S.J."/>
        </authorList>
    </citation>
    <scope>SUBCELLULAR LOCATION</scope>
    <scope>INTERACTION WITH RHNO1</scope>
    <scope>IDENTIFICATION BY MASS SPECTROMETRY</scope>
</reference>
<reference key="25">
    <citation type="journal article" date="2012" name="Nucleic Acids Res.">
        <title>The N-terminus of the human RecQL4 helicase is a homeodomain-like DNA interaction motif.</title>
        <authorList>
            <person name="Ohlenschlager O."/>
            <person name="Kuhnert A."/>
            <person name="Schneider A."/>
            <person name="Haumann S."/>
            <person name="Bellstedt P."/>
            <person name="Keller H."/>
            <person name="Saluz H.P."/>
            <person name="Hortschansky P."/>
            <person name="Hanel F."/>
            <person name="Grosse F."/>
            <person name="Gorlach M."/>
            <person name="Pospiech H."/>
        </authorList>
    </citation>
    <scope>INTERACTION WITH RECQ4</scope>
</reference>
<reference key="26">
    <citation type="journal article" date="2013" name="J. Proteome Res.">
        <title>Toward a comprehensive characterization of a human cancer cell phosphoproteome.</title>
        <authorList>
            <person name="Zhou H."/>
            <person name="Di Palma S."/>
            <person name="Preisinger C."/>
            <person name="Peng M."/>
            <person name="Polat A.N."/>
            <person name="Heck A.J."/>
            <person name="Mohammed S."/>
        </authorList>
    </citation>
    <scope>PHOSPHORYLATION [LARGE SCALE ANALYSIS] AT THR-298; THR-779; SER-860; THR-861; SER-864; SER-888; THR-1064 AND SER-1504</scope>
    <scope>IDENTIFICATION BY MASS SPECTROMETRY [LARGE SCALE ANALYSIS]</scope>
    <source>
        <tissue>Cervix carcinoma</tissue>
        <tissue>Erythroleukemia</tissue>
    </source>
</reference>
<reference key="27">
    <citation type="journal article" date="2015" name="Cell Cycle">
        <title>RHINO forms a stoichiometric complex with the 9-1-1 checkpoint clamp and mediates ATR-Chk1 signaling.</title>
        <authorList>
            <person name="Lindsey-Boltz L.A."/>
            <person name="Kemp M.G."/>
            <person name="Capp C."/>
            <person name="Sancar A."/>
        </authorList>
    </citation>
    <scope>INTERACTION WITH RHNO1</scope>
</reference>
<reference key="28">
    <citation type="journal article" date="2015" name="Exp. Cell Res.">
        <title>Human DNA helicase B interacts with the replication initiation protein Cdc45 and facilitates Cdc45 binding onto chromatin.</title>
        <authorList>
            <person name="Gerhardt J."/>
            <person name="Guler G.D."/>
            <person name="Fanning E."/>
        </authorList>
    </citation>
    <scope>INTERACTION WITH HELB</scope>
</reference>
<reference key="29">
    <citation type="journal article" date="2016" name="J. Cell Biol.">
        <title>TOPBP1 regulates RAD51 phosphorylation and chromatin loading and determines PARP inhibitor sensitivity.</title>
        <authorList>
            <person name="Moudry P."/>
            <person name="Watanabe K."/>
            <person name="Wolanin K.M."/>
            <person name="Bartkova J."/>
            <person name="Wassing I.E."/>
            <person name="Watanabe S."/>
            <person name="Strauss R."/>
            <person name="Troelsgaard Pedersen R."/>
            <person name="Oestergaard V.H."/>
            <person name="Lisby M."/>
            <person name="Andujar-Sanchez M."/>
            <person name="Maya-Mendoza A."/>
            <person name="Esashi F."/>
            <person name="Lukas J."/>
            <person name="Bartek J."/>
        </authorList>
    </citation>
    <scope>FUNCTION</scope>
    <scope>SUBCELLULAR LOCATION</scope>
    <scope>INTERACTION WITH RAD51</scope>
</reference>
<reference key="30">
    <citation type="journal article" date="2019" name="Mol. Cell">
        <title>MDC1 interacts with TOPBP1 to maintain chromosomal stability during mitosis.</title>
        <authorList>
            <person name="Leimbacher P.A."/>
            <person name="Jones S.E."/>
            <person name="Shorrocks A.K."/>
            <person name="de Marco Zompit M."/>
            <person name="Day M."/>
            <person name="Blaauwendraad J."/>
            <person name="Bundschuh D."/>
            <person name="Bonham S."/>
            <person name="Fischer R."/>
            <person name="Fink D."/>
            <person name="Kessler B.M."/>
            <person name="Oliver A.W."/>
            <person name="Pearl L.H."/>
            <person name="Blackford A.N."/>
            <person name="Stucki M."/>
        </authorList>
    </citation>
    <scope>FUNCTION</scope>
    <scope>INTERACTION WITH MDC1</scope>
    <scope>SUBCELLULAR LOCATION</scope>
    <scope>DOMAIN</scope>
    <scope>MUTAGENESIS OF LYS-155</scope>
</reference>
<reference key="31">
    <citation type="journal article" date="2021" name="DNA Repair">
        <title>USP13 regulates the replication stress response by deubiquitinating TopBP1.</title>
        <authorList>
            <person name="Kim W."/>
            <person name="Zhao F."/>
            <person name="Gao H."/>
            <person name="Qin S."/>
            <person name="Hou J."/>
            <person name="Deng M."/>
            <person name="Kloeber J.A."/>
            <person name="Huang J."/>
            <person name="Zhou Q."/>
            <person name="Guo G."/>
            <person name="Gao M."/>
            <person name="Zeng X."/>
            <person name="Zhu S."/>
            <person name="Tu X."/>
            <person name="Wu Z."/>
            <person name="Zhang Y."/>
            <person name="Yin P."/>
            <person name="Kaufmann S.H."/>
            <person name="Luo K."/>
            <person name="Lou Z."/>
        </authorList>
    </citation>
    <scope>FUNCTION</scope>
    <scope>DEUBIQUITINATION BY USP13</scope>
</reference>
<reference key="32">
    <citation type="journal article" date="2021" name="Nat. Cancer">
        <title>The CIP2A-TOPBP1 axis safeguards chromosome stability and is a synthetic lethal target for BRCA-mutated cancer.</title>
        <authorList>
            <person name="Adam S."/>
            <person name="Rossi S.E."/>
            <person name="Moatti N."/>
            <person name="De Marco Zompit M."/>
            <person name="Xue Y."/>
            <person name="Ng T.F."/>
            <person name="Alvarez-Quilon A."/>
            <person name="Desjardins J."/>
            <person name="Bhaskaran V."/>
            <person name="Martino G."/>
            <person name="Setiaputra D."/>
            <person name="Noordermeer S.M."/>
            <person name="Ohsumi T.K."/>
            <person name="Hustedt N."/>
            <person name="Szilard R.K."/>
            <person name="Chaudhary N."/>
            <person name="Munro M."/>
            <person name="Veloso A."/>
            <person name="Melo H."/>
            <person name="Yin S.Y."/>
            <person name="Papp R."/>
            <person name="Young J.T.F."/>
            <person name="Zinda M."/>
            <person name="Stucki M."/>
            <person name="Durocher D."/>
        </authorList>
    </citation>
    <scope>FUNCTION</scope>
    <scope>SUBCELLULAR LOCATION</scope>
    <scope>INTERACTION WITH CIP2A</scope>
    <scope>MUTAGENESIS OF 837-PHE--VAL-839</scope>
</reference>
<reference key="33">
    <citation type="journal article" date="2022" name="Nat. Commun.">
        <title>The CIP2A-TOPBP1 complex safeguards chromosomal stability during mitosis.</title>
        <authorList>
            <person name="De Marco Zompit M."/>
            <person name="Esteban M.T."/>
            <person name="Mooser C."/>
            <person name="Adam S."/>
            <person name="Rossi S.E."/>
            <person name="Jeanrenaud A."/>
            <person name="Leimbacher P.A."/>
            <person name="Fink D."/>
            <person name="Shorrocks A.K."/>
            <person name="Blackford A.N."/>
            <person name="Durocher D."/>
            <person name="Stucki M."/>
        </authorList>
    </citation>
    <scope>FUNCTION</scope>
    <scope>SUBCELLULAR LOCATION</scope>
    <scope>INTERACTION WITH CIP2A</scope>
</reference>
<reference key="34">
    <citation type="journal article" date="2022" name="Mol. Cell">
        <title>A PARylation-phosphorylation cascade promotes TOPBP1 loading and RPA-RAD51 exchange in homologous recombination.</title>
        <authorList>
            <person name="Zhao J."/>
            <person name="Tian S."/>
            <person name="Guo Q."/>
            <person name="Bao K."/>
            <person name="Yu G."/>
            <person name="Wang X."/>
            <person name="Shen X."/>
            <person name="Zhang J."/>
            <person name="Chen J."/>
            <person name="Yang Y."/>
            <person name="Liu L."/>
            <person name="Li X."/>
            <person name="Hao J."/>
            <person name="Yang N."/>
            <person name="Liu Z."/>
            <person name="Ai D."/>
            <person name="Yang J."/>
            <person name="Zhu Y."/>
            <person name="Yao Z."/>
            <person name="Ma S."/>
            <person name="Zhang K."/>
            <person name="Shi L."/>
        </authorList>
    </citation>
    <scope>FUNCTION</scope>
    <scope>SUBCELLULAR LOCATION</scope>
    <scope>INTERACTION WITH HTATSF1</scope>
    <scope>MUTAGENESIS OF LYS-250; LYS-704 AND LYS-1317</scope>
</reference>
<reference key="35">
    <citation type="journal article" date="2023" name="Nature">
        <title>Mitotic clustering of pulverized chromosomes from micronuclei.</title>
        <authorList>
            <person name="Lin Y.F."/>
            <person name="Hu Q."/>
            <person name="Mazzagatti A."/>
            <person name="Valle-Inclan J.E."/>
            <person name="Maurais E.G."/>
            <person name="Dahiya R."/>
            <person name="Guyer A."/>
            <person name="Sanders J.T."/>
            <person name="Engel J.L."/>
            <person name="Nguyen G."/>
            <person name="Bronder D."/>
            <person name="Bakhoum S.F."/>
            <person name="Cortes-Ciriano I."/>
            <person name="Ly P."/>
        </authorList>
    </citation>
    <scope>FUNCTION</scope>
    <scope>SUBCELLULAR LOCATION</scope>
    <scope>INTERACTION WITH CIP2A</scope>
</reference>
<reference key="36">
    <citation type="journal article" date="2023" name="Nature">
        <title>Mitotic tethering enables inheritance of shattered micronuclear chromosomes.</title>
        <authorList>
            <person name="Trivedi P."/>
            <person name="Steele C.D."/>
            <person name="Au F.K.C."/>
            <person name="Alexandrov L.B."/>
            <person name="Cleveland D.W."/>
        </authorList>
    </citation>
    <scope>FUNCTION</scope>
    <scope>SUBCELLULAR LOCATION</scope>
    <scope>INTERACTION WITH CIP2A</scope>
</reference>
<reference key="37">
    <citation type="journal article" date="2023" name="Nature">
        <title>Poltheta is phosphorylated by PLK1 to repair double-strand breaks in mitosis.</title>
        <authorList>
            <person name="Gelot C."/>
            <person name="Kovacs M.T."/>
            <person name="Miron S."/>
            <person name="Mylne E."/>
            <person name="Haan A."/>
            <person name="Boeffard-Dosierre L."/>
            <person name="Ghouil R."/>
            <person name="Popova T."/>
            <person name="Dingli F."/>
            <person name="Loew D."/>
            <person name="Guirouilh-Barbat J."/>
            <person name="Del Nery E."/>
            <person name="Zinn-Justin S."/>
            <person name="Ceccaldi R."/>
        </authorList>
    </citation>
    <scope>FUNCTION</scope>
    <scope>SUBCELLULAR LOCATION</scope>
    <scope>INTERACTION WITH POLQ</scope>
    <scope>DOMAIN</scope>
</reference>
<reference key="38">
    <citation type="submission" date="2004-11" db="PDB data bank">
        <title>The third BRCA1 C-terminus (BRCT) domain of topoisomerase II binding protein.</title>
        <authorList>
            <consortium name="RIKEN structural genomics initiative (RSGI)"/>
        </authorList>
    </citation>
    <scope>STRUCTURE BY NMR OF 327-444</scope>
</reference>
<reference key="39">
    <citation type="journal article" date="2010" name="Protein Sci.">
        <title>Insights from the crystal structure of the sixth BRCT domain of topoisomerase IIbeta binding protein 1.</title>
        <authorList>
            <person name="Leung C.C."/>
            <person name="Kellogg E."/>
            <person name="Kuhnert A."/>
            <person name="Hanel F."/>
            <person name="Baker D."/>
            <person name="Glover J.N."/>
        </authorList>
    </citation>
    <scope>X-RAY CRYSTALLOGRAPHY (1.34 ANGSTROMS) OF 893-996</scope>
</reference>
<reference evidence="39 40" key="40">
    <citation type="journal article" date="2013" name="Structure">
        <title>Structural insights into recognition of MDC1 by TopBP1 in DNA replication checkpoint control.</title>
        <authorList>
            <person name="Leung C.C."/>
            <person name="Sun L."/>
            <person name="Gong Z."/>
            <person name="Burkat M."/>
            <person name="Edwards R."/>
            <person name="Assmus M."/>
            <person name="Chen J."/>
            <person name="Glover J.N."/>
        </authorList>
    </citation>
    <scope>X-RAY CRYSTALLOGRAPHY (1.90 ANGSTROMS) OF 549-746 IN COMPLEX WITH MDC1</scope>
    <scope>MUTAGENESIS OF SER-564; 681-ARG-LYS-682 AND LYS-704</scope>
</reference>
<reference evidence="41 42" key="41">
    <citation type="journal article" date="2019" name="Elife">
        <title>Phosphorylation-mediated interactions with TOPBP1 couple 53BP1 and 9-1-1 to control the G1 DNA damage checkpoint.</title>
        <authorList>
            <person name="Bigot N."/>
            <person name="Day M."/>
            <person name="Baldock R.A."/>
            <person name="Watts F.Z."/>
            <person name="Oliver A.W."/>
            <person name="Pearl L.H."/>
        </authorList>
    </citation>
    <scope>X-RAY CRYSTALLOGRAPHY (2.81 ANGSTROMS) OF 1-290 IN COMPLEX WITH TP53BP1</scope>
    <scope>FUNCTION</scope>
    <scope>DOMAIN</scope>
    <scope>MUTAGENESIS OF LYS-155 AND LYS-250</scope>
</reference>
<dbReference type="EMBL" id="AB019397">
    <property type="protein sequence ID" value="BAA34202.1"/>
    <property type="status" value="ALT_INIT"/>
    <property type="molecule type" value="mRNA"/>
</dbReference>
<dbReference type="EMBL" id="D87448">
    <property type="protein sequence ID" value="BAA13389.1"/>
    <property type="status" value="ALT_INIT"/>
    <property type="molecule type" value="mRNA"/>
</dbReference>
<dbReference type="EMBL" id="AK302584">
    <property type="protein sequence ID" value="BAH13754.1"/>
    <property type="molecule type" value="mRNA"/>
</dbReference>
<dbReference type="EMBL" id="AC016255">
    <property type="status" value="NOT_ANNOTATED_CDS"/>
    <property type="molecule type" value="Genomic_DNA"/>
</dbReference>
<dbReference type="EMBL" id="AC083905">
    <property type="status" value="NOT_ANNOTATED_CDS"/>
    <property type="molecule type" value="Genomic_DNA"/>
</dbReference>
<dbReference type="CCDS" id="CCDS46919.1"/>
<dbReference type="RefSeq" id="NP_008958.2">
    <property type="nucleotide sequence ID" value="NM_007027.4"/>
</dbReference>
<dbReference type="RefSeq" id="XP_016861125.1">
    <property type="nucleotide sequence ID" value="XM_017005636.3"/>
</dbReference>
<dbReference type="PDB" id="1WF6">
    <property type="method" value="NMR"/>
    <property type="chains" value="A=326-444"/>
</dbReference>
<dbReference type="PDB" id="2XNH">
    <property type="method" value="X-ray"/>
    <property type="resolution" value="2.80 A"/>
    <property type="chains" value="A=1-287"/>
</dbReference>
<dbReference type="PDB" id="2XNK">
    <property type="method" value="X-ray"/>
    <property type="resolution" value="2.60 A"/>
    <property type="chains" value="A/B/C/D=1-290"/>
</dbReference>
<dbReference type="PDB" id="3AL2">
    <property type="method" value="X-ray"/>
    <property type="resolution" value="2.00 A"/>
    <property type="chains" value="A=1264-1493"/>
</dbReference>
<dbReference type="PDB" id="3AL3">
    <property type="method" value="X-ray"/>
    <property type="resolution" value="2.15 A"/>
    <property type="chains" value="A=1264-1493"/>
</dbReference>
<dbReference type="PDB" id="3JVE">
    <property type="method" value="X-ray"/>
    <property type="resolution" value="1.34 A"/>
    <property type="chains" value="A=893-996"/>
</dbReference>
<dbReference type="PDB" id="3OLC">
    <property type="method" value="X-ray"/>
    <property type="resolution" value="2.40 A"/>
    <property type="chains" value="X=1-290"/>
</dbReference>
<dbReference type="PDB" id="3PD7">
    <property type="method" value="X-ray"/>
    <property type="resolution" value="1.26 A"/>
    <property type="chains" value="A/B=893-994"/>
</dbReference>
<dbReference type="PDB" id="3UEN">
    <property type="method" value="X-ray"/>
    <property type="resolution" value="1.90 A"/>
    <property type="chains" value="A=549-746"/>
</dbReference>
<dbReference type="PDB" id="3UEO">
    <property type="method" value="X-ray"/>
    <property type="resolution" value="2.60 A"/>
    <property type="chains" value="A/B/C/D=549-746"/>
</dbReference>
<dbReference type="PDB" id="6RML">
    <property type="method" value="X-ray"/>
    <property type="resolution" value="2.81 A"/>
    <property type="chains" value="A/B=1-290"/>
</dbReference>
<dbReference type="PDB" id="6RMM">
    <property type="method" value="X-ray"/>
    <property type="resolution" value="3.53 A"/>
    <property type="chains" value="A/B/C/D=548-741"/>
</dbReference>
<dbReference type="PDB" id="7CMZ">
    <property type="method" value="X-ray"/>
    <property type="resolution" value="1.70 A"/>
    <property type="chains" value="A=1264-1493"/>
</dbReference>
<dbReference type="PDB" id="8OK2">
    <property type="method" value="EM"/>
    <property type="resolution" value="4.10 A"/>
    <property type="chains" value="E=331-766"/>
</dbReference>
<dbReference type="PDBsum" id="1WF6"/>
<dbReference type="PDBsum" id="2XNH"/>
<dbReference type="PDBsum" id="2XNK"/>
<dbReference type="PDBsum" id="3AL2"/>
<dbReference type="PDBsum" id="3AL3"/>
<dbReference type="PDBsum" id="3JVE"/>
<dbReference type="PDBsum" id="3OLC"/>
<dbReference type="PDBsum" id="3PD7"/>
<dbReference type="PDBsum" id="3UEN"/>
<dbReference type="PDBsum" id="3UEO"/>
<dbReference type="PDBsum" id="6RML"/>
<dbReference type="PDBsum" id="6RMM"/>
<dbReference type="PDBsum" id="7CMZ"/>
<dbReference type="PDBsum" id="8OK2"/>
<dbReference type="SMR" id="Q92547"/>
<dbReference type="BioGRID" id="116256">
    <property type="interactions" value="121"/>
</dbReference>
<dbReference type="ComplexPortal" id="CPX-4426">
    <property type="entry name" value="BRCA1-B complex"/>
</dbReference>
<dbReference type="CORUM" id="Q92547"/>
<dbReference type="DIP" id="DIP-24263N"/>
<dbReference type="FunCoup" id="Q92547">
    <property type="interactions" value="3540"/>
</dbReference>
<dbReference type="IntAct" id="Q92547">
    <property type="interactions" value="49"/>
</dbReference>
<dbReference type="MINT" id="Q92547"/>
<dbReference type="STRING" id="9606.ENSP00000260810"/>
<dbReference type="BindingDB" id="Q92547"/>
<dbReference type="ChEMBL" id="CHEMBL3175"/>
<dbReference type="GlyGen" id="Q92547">
    <property type="glycosylation" value="6 sites, 2 N-linked glycans (4 sites), 1 O-linked glycan (2 sites)"/>
</dbReference>
<dbReference type="iPTMnet" id="Q92547"/>
<dbReference type="PhosphoSitePlus" id="Q92547"/>
<dbReference type="BioMuta" id="TOPBP1"/>
<dbReference type="DMDM" id="296453012"/>
<dbReference type="CPTAC" id="CPTAC-3258"/>
<dbReference type="CPTAC" id="CPTAC-3290"/>
<dbReference type="CPTAC" id="CPTAC-3291"/>
<dbReference type="CPTAC" id="CPTAC-950"/>
<dbReference type="jPOST" id="Q92547"/>
<dbReference type="MassIVE" id="Q92547"/>
<dbReference type="PaxDb" id="9606-ENSP00000260810"/>
<dbReference type="PeptideAtlas" id="Q92547"/>
<dbReference type="ProteomicsDB" id="75308"/>
<dbReference type="Pumba" id="Q92547"/>
<dbReference type="Antibodypedia" id="8745">
    <property type="antibodies" value="327 antibodies from 32 providers"/>
</dbReference>
<dbReference type="DNASU" id="11073"/>
<dbReference type="Ensembl" id="ENST00000260810.10">
    <property type="protein sequence ID" value="ENSP00000260810.5"/>
    <property type="gene ID" value="ENSG00000163781.14"/>
</dbReference>
<dbReference type="GeneID" id="11073"/>
<dbReference type="KEGG" id="hsa:11073"/>
<dbReference type="MANE-Select" id="ENST00000260810.10">
    <property type="protein sequence ID" value="ENSP00000260810.5"/>
    <property type="RefSeq nucleotide sequence ID" value="NM_007027.4"/>
    <property type="RefSeq protein sequence ID" value="NP_008958.2"/>
</dbReference>
<dbReference type="UCSC" id="uc003eps.4">
    <property type="organism name" value="human"/>
</dbReference>
<dbReference type="AGR" id="HGNC:17008"/>
<dbReference type="CTD" id="11073"/>
<dbReference type="DisGeNET" id="11073"/>
<dbReference type="GeneCards" id="TOPBP1"/>
<dbReference type="HGNC" id="HGNC:17008">
    <property type="gene designation" value="TOPBP1"/>
</dbReference>
<dbReference type="HPA" id="ENSG00000163781">
    <property type="expression patterns" value="Low tissue specificity"/>
</dbReference>
<dbReference type="MIM" id="607760">
    <property type="type" value="gene"/>
</dbReference>
<dbReference type="neXtProt" id="NX_Q92547"/>
<dbReference type="OpenTargets" id="ENSG00000163781"/>
<dbReference type="PharmGKB" id="PA134934073"/>
<dbReference type="VEuPathDB" id="HostDB:ENSG00000163781"/>
<dbReference type="eggNOG" id="KOG1929">
    <property type="taxonomic scope" value="Eukaryota"/>
</dbReference>
<dbReference type="GeneTree" id="ENSGT00940000157001"/>
<dbReference type="HOGENOM" id="CLU_004165_1_0_1"/>
<dbReference type="InParanoid" id="Q92547"/>
<dbReference type="OMA" id="NVHCLKT"/>
<dbReference type="OrthoDB" id="251770at2759"/>
<dbReference type="PAN-GO" id="Q92547">
    <property type="GO annotations" value="3 GO annotations based on evolutionary models"/>
</dbReference>
<dbReference type="PhylomeDB" id="Q92547"/>
<dbReference type="TreeFam" id="TF326403"/>
<dbReference type="PathwayCommons" id="Q92547"/>
<dbReference type="Reactome" id="R-HSA-5685938">
    <property type="pathway name" value="HDR through Single Strand Annealing (SSA)"/>
</dbReference>
<dbReference type="Reactome" id="R-HSA-5693607">
    <property type="pathway name" value="Processing of DNA double-strand break ends"/>
</dbReference>
<dbReference type="Reactome" id="R-HSA-5693616">
    <property type="pathway name" value="Presynaptic phase of homologous DNA pairing and strand exchange"/>
</dbReference>
<dbReference type="Reactome" id="R-HSA-6804756">
    <property type="pathway name" value="Regulation of TP53 Activity through Phosphorylation"/>
</dbReference>
<dbReference type="Reactome" id="R-HSA-69473">
    <property type="pathway name" value="G2/M DNA damage checkpoint"/>
</dbReference>
<dbReference type="Reactome" id="R-HSA-9709570">
    <property type="pathway name" value="Impaired BRCA2 binding to RAD51"/>
</dbReference>
<dbReference type="SignaLink" id="Q92547"/>
<dbReference type="SIGNOR" id="Q92547"/>
<dbReference type="BioGRID-ORCS" id="11073">
    <property type="hits" value="764 hits in 1170 CRISPR screens"/>
</dbReference>
<dbReference type="CD-CODE" id="8C2F96ED">
    <property type="entry name" value="Centrosome"/>
</dbReference>
<dbReference type="CD-CODE" id="91857CE7">
    <property type="entry name" value="Nucleolus"/>
</dbReference>
<dbReference type="CD-CODE" id="C4912696">
    <property type="entry name" value="TopBP1 condensate"/>
</dbReference>
<dbReference type="CD-CODE" id="D3B9EAFD">
    <property type="entry name" value="Synthetic Condensate 000362"/>
</dbReference>
<dbReference type="ChiTaRS" id="TOPBP1">
    <property type="organism name" value="human"/>
</dbReference>
<dbReference type="EvolutionaryTrace" id="Q92547"/>
<dbReference type="GeneWiki" id="TOPBP1"/>
<dbReference type="GenomeRNAi" id="11073"/>
<dbReference type="Pharos" id="Q92547">
    <property type="development level" value="Tbio"/>
</dbReference>
<dbReference type="PRO" id="PR:Q92547"/>
<dbReference type="Proteomes" id="UP000005640">
    <property type="component" value="Chromosome 3"/>
</dbReference>
<dbReference type="RNAct" id="Q92547">
    <property type="molecule type" value="protein"/>
</dbReference>
<dbReference type="Bgee" id="ENSG00000163781">
    <property type="expression patterns" value="Expressed in sperm and 204 other cell types or tissues"/>
</dbReference>
<dbReference type="ExpressionAtlas" id="Q92547">
    <property type="expression patterns" value="baseline and differential"/>
</dbReference>
<dbReference type="GO" id="GO:0015629">
    <property type="term" value="C:actin cytoskeleton"/>
    <property type="evidence" value="ECO:0000314"/>
    <property type="project" value="HPA"/>
</dbReference>
<dbReference type="GO" id="GO:0070532">
    <property type="term" value="C:BRCA1-B complex"/>
    <property type="evidence" value="ECO:0000353"/>
    <property type="project" value="ComplexPortal"/>
</dbReference>
<dbReference type="GO" id="GO:0005813">
    <property type="term" value="C:centrosome"/>
    <property type="evidence" value="ECO:0007669"/>
    <property type="project" value="UniProtKB-SubCell"/>
</dbReference>
<dbReference type="GO" id="GO:0005694">
    <property type="term" value="C:chromosome"/>
    <property type="evidence" value="ECO:0000314"/>
    <property type="project" value="UniProtKB"/>
</dbReference>
<dbReference type="GO" id="GO:0000794">
    <property type="term" value="C:condensed nuclear chromosome"/>
    <property type="evidence" value="ECO:0007669"/>
    <property type="project" value="Ensembl"/>
</dbReference>
<dbReference type="GO" id="GO:0005737">
    <property type="term" value="C:cytoplasm"/>
    <property type="evidence" value="ECO:0007669"/>
    <property type="project" value="UniProtKB-KW"/>
</dbReference>
<dbReference type="GO" id="GO:0001673">
    <property type="term" value="C:male germ cell nucleus"/>
    <property type="evidence" value="ECO:0007669"/>
    <property type="project" value="Ensembl"/>
</dbReference>
<dbReference type="GO" id="GO:0016604">
    <property type="term" value="C:nuclear body"/>
    <property type="evidence" value="ECO:0000314"/>
    <property type="project" value="HPA"/>
</dbReference>
<dbReference type="GO" id="GO:0005654">
    <property type="term" value="C:nucleoplasm"/>
    <property type="evidence" value="ECO:0000314"/>
    <property type="project" value="HPA"/>
</dbReference>
<dbReference type="GO" id="GO:0005634">
    <property type="term" value="C:nucleus"/>
    <property type="evidence" value="ECO:0000304"/>
    <property type="project" value="ProtInc"/>
</dbReference>
<dbReference type="GO" id="GO:0005886">
    <property type="term" value="C:plasma membrane"/>
    <property type="evidence" value="ECO:0000314"/>
    <property type="project" value="HPA"/>
</dbReference>
<dbReference type="GO" id="GO:0016605">
    <property type="term" value="C:PML body"/>
    <property type="evidence" value="ECO:0000314"/>
    <property type="project" value="UniProtKB"/>
</dbReference>
<dbReference type="GO" id="GO:0090734">
    <property type="term" value="C:site of DNA damage"/>
    <property type="evidence" value="ECO:0000314"/>
    <property type="project" value="UniProt"/>
</dbReference>
<dbReference type="GO" id="GO:0035861">
    <property type="term" value="C:site of double-strand break"/>
    <property type="evidence" value="ECO:0000314"/>
    <property type="project" value="UniProtKB"/>
</dbReference>
<dbReference type="GO" id="GO:0000922">
    <property type="term" value="C:spindle pole"/>
    <property type="evidence" value="ECO:0007669"/>
    <property type="project" value="UniProtKB-SubCell"/>
</dbReference>
<dbReference type="GO" id="GO:0140463">
    <property type="term" value="F:chromatin-protein adaptor activity"/>
    <property type="evidence" value="ECO:0000314"/>
    <property type="project" value="UniProtKB"/>
</dbReference>
<dbReference type="GO" id="GO:0003677">
    <property type="term" value="F:DNA binding"/>
    <property type="evidence" value="ECO:0007669"/>
    <property type="project" value="UniProtKB-KW"/>
</dbReference>
<dbReference type="GO" id="GO:0042802">
    <property type="term" value="F:identical protein binding"/>
    <property type="evidence" value="ECO:0000353"/>
    <property type="project" value="IntAct"/>
</dbReference>
<dbReference type="GO" id="GO:0140031">
    <property type="term" value="F:phosphorylation-dependent protein binding"/>
    <property type="evidence" value="ECO:0000314"/>
    <property type="project" value="UniProtKB"/>
</dbReference>
<dbReference type="GO" id="GO:0043539">
    <property type="term" value="F:protein serine/threonine kinase activator activity"/>
    <property type="evidence" value="ECO:0000314"/>
    <property type="project" value="UniProtKB"/>
</dbReference>
<dbReference type="GO" id="GO:0141112">
    <property type="term" value="P:broken chromosome clustering"/>
    <property type="evidence" value="ECO:0000314"/>
    <property type="project" value="UniProtKB"/>
</dbReference>
<dbReference type="GO" id="GO:0051276">
    <property type="term" value="P:chromosome organization"/>
    <property type="evidence" value="ECO:0000314"/>
    <property type="project" value="UniProtKB"/>
</dbReference>
<dbReference type="GO" id="GO:0000077">
    <property type="term" value="P:DNA damage checkpoint signaling"/>
    <property type="evidence" value="ECO:0000314"/>
    <property type="project" value="UniProtKB"/>
</dbReference>
<dbReference type="GO" id="GO:0006974">
    <property type="term" value="P:DNA damage response"/>
    <property type="evidence" value="ECO:0000314"/>
    <property type="project" value="UniProtKB"/>
</dbReference>
<dbReference type="GO" id="GO:0006259">
    <property type="term" value="P:DNA metabolic process"/>
    <property type="evidence" value="ECO:0000304"/>
    <property type="project" value="ProtInc"/>
</dbReference>
<dbReference type="GO" id="GO:0006281">
    <property type="term" value="P:DNA repair"/>
    <property type="evidence" value="ECO:0000303"/>
    <property type="project" value="UniProtKB"/>
</dbReference>
<dbReference type="GO" id="GO:0000076">
    <property type="term" value="P:DNA replication checkpoint signaling"/>
    <property type="evidence" value="ECO:0000314"/>
    <property type="project" value="UniProtKB"/>
</dbReference>
<dbReference type="GO" id="GO:0006270">
    <property type="term" value="P:DNA replication initiation"/>
    <property type="evidence" value="ECO:0000318"/>
    <property type="project" value="GO_Central"/>
</dbReference>
<dbReference type="GO" id="GO:0097681">
    <property type="term" value="P:double-strand break repair via alternative nonhomologous end joining"/>
    <property type="evidence" value="ECO:0000314"/>
    <property type="project" value="UniProtKB"/>
</dbReference>
<dbReference type="GO" id="GO:0097680">
    <property type="term" value="P:double-strand break repair via classical nonhomologous end joining"/>
    <property type="evidence" value="ECO:0000314"/>
    <property type="project" value="UniProtKB"/>
</dbReference>
<dbReference type="GO" id="GO:0000724">
    <property type="term" value="P:double-strand break repair via homologous recombination"/>
    <property type="evidence" value="ECO:0000314"/>
    <property type="project" value="UniProtKB"/>
</dbReference>
<dbReference type="GO" id="GO:0035825">
    <property type="term" value="P:homologous recombination"/>
    <property type="evidence" value="ECO:0000303"/>
    <property type="project" value="ComplexPortal"/>
</dbReference>
<dbReference type="GO" id="GO:0033314">
    <property type="term" value="P:mitotic DNA replication checkpoint signaling"/>
    <property type="evidence" value="ECO:0000318"/>
    <property type="project" value="GO_Central"/>
</dbReference>
<dbReference type="GO" id="GO:0007095">
    <property type="term" value="P:mitotic G2 DNA damage checkpoint signaling"/>
    <property type="evidence" value="ECO:0000318"/>
    <property type="project" value="GO_Central"/>
</dbReference>
<dbReference type="GO" id="GO:1990166">
    <property type="term" value="P:protein localization to site of double-strand break"/>
    <property type="evidence" value="ECO:0000314"/>
    <property type="project" value="UniProtKB"/>
</dbReference>
<dbReference type="GO" id="GO:0010212">
    <property type="term" value="P:response to ionizing radiation"/>
    <property type="evidence" value="ECO:0000314"/>
    <property type="project" value="UniProtKB"/>
</dbReference>
<dbReference type="CDD" id="cd17737">
    <property type="entry name" value="BRCT_TopBP1_rpt1"/>
    <property type="match status" value="1"/>
</dbReference>
<dbReference type="CDD" id="cd17731">
    <property type="entry name" value="BRCT_TopBP1_rpt2_like"/>
    <property type="match status" value="1"/>
</dbReference>
<dbReference type="CDD" id="cd17718">
    <property type="entry name" value="BRCT_TopBP1_rpt3"/>
    <property type="match status" value="1"/>
</dbReference>
<dbReference type="CDD" id="cd17749">
    <property type="entry name" value="BRCT_TopBP1_rpt4"/>
    <property type="match status" value="1"/>
</dbReference>
<dbReference type="CDD" id="cd18434">
    <property type="entry name" value="BRCT_TopBP1_rpt5"/>
    <property type="match status" value="1"/>
</dbReference>
<dbReference type="CDD" id="cd17727">
    <property type="entry name" value="BRCT_TopBP1_rpt6"/>
    <property type="match status" value="1"/>
</dbReference>
<dbReference type="CDD" id="cd17738">
    <property type="entry name" value="BRCT_TopBP1_rpt7"/>
    <property type="match status" value="1"/>
</dbReference>
<dbReference type="CDD" id="cd17728">
    <property type="entry name" value="BRCT_TopBP1_rpt8"/>
    <property type="match status" value="1"/>
</dbReference>
<dbReference type="FunFam" id="3.40.50.10190:FF:000018">
    <property type="entry name" value="DNA topoisomerase 2-binding protein 1"/>
    <property type="match status" value="1"/>
</dbReference>
<dbReference type="FunFam" id="3.40.50.10190:FF:000028">
    <property type="entry name" value="DNA topoisomerase 2-binding protein 1 isoform X1"/>
    <property type="match status" value="1"/>
</dbReference>
<dbReference type="FunFam" id="3.40.50.10190:FF:000010">
    <property type="entry name" value="DNA topoisomerase II binding protein 1"/>
    <property type="match status" value="1"/>
</dbReference>
<dbReference type="FunFam" id="3.40.50.10190:FF:000020">
    <property type="entry name" value="DNA topoisomerase II binding protein 1"/>
    <property type="match status" value="1"/>
</dbReference>
<dbReference type="FunFam" id="3.40.50.10190:FF:000021">
    <property type="entry name" value="DNA topoisomerase II binding protein 1"/>
    <property type="match status" value="1"/>
</dbReference>
<dbReference type="FunFam" id="3.40.50.10190:FF:000022">
    <property type="entry name" value="DNA topoisomerase II binding protein 1"/>
    <property type="match status" value="1"/>
</dbReference>
<dbReference type="FunFam" id="3.40.50.10190:FF:000023">
    <property type="entry name" value="DNA topoisomerase II binding protein 1"/>
    <property type="match status" value="1"/>
</dbReference>
<dbReference type="FunFam" id="3.40.50.10190:FF:000029">
    <property type="entry name" value="DNA topoisomerase II binding protein 1"/>
    <property type="match status" value="1"/>
</dbReference>
<dbReference type="FunFam" id="3.40.50.10190:FF:000033">
    <property type="entry name" value="DNA topoisomerase II binding protein 1"/>
    <property type="match status" value="1"/>
</dbReference>
<dbReference type="Gene3D" id="3.40.50.10190">
    <property type="entry name" value="BRCT domain"/>
    <property type="match status" value="9"/>
</dbReference>
<dbReference type="InterPro" id="IPR001357">
    <property type="entry name" value="BRCT_dom"/>
</dbReference>
<dbReference type="InterPro" id="IPR036420">
    <property type="entry name" value="BRCT_dom_sf"/>
</dbReference>
<dbReference type="InterPro" id="IPR049936">
    <property type="entry name" value="BRCT_TopBP1_rpt8"/>
</dbReference>
<dbReference type="InterPro" id="IPR035960">
    <property type="entry name" value="Secretoglobin_sf"/>
</dbReference>
<dbReference type="InterPro" id="IPR049542">
    <property type="entry name" value="TopBP1-like_BRCT0"/>
</dbReference>
<dbReference type="InterPro" id="IPR044737">
    <property type="entry name" value="TopBP1_BRCT_1"/>
</dbReference>
<dbReference type="PANTHER" id="PTHR13561">
    <property type="entry name" value="DNA REPLICATION REGULATOR DPB11-RELATED"/>
    <property type="match status" value="1"/>
</dbReference>
<dbReference type="PANTHER" id="PTHR13561:SF20">
    <property type="entry name" value="DNA TOPOISOMERASE 2-BINDING PROTEIN 1"/>
    <property type="match status" value="1"/>
</dbReference>
<dbReference type="Pfam" id="PF00533">
    <property type="entry name" value="BRCT"/>
    <property type="match status" value="6"/>
</dbReference>
<dbReference type="Pfam" id="PF23294">
    <property type="entry name" value="BRCT_TopB1_SLF1"/>
    <property type="match status" value="1"/>
</dbReference>
<dbReference type="Pfam" id="PF12738">
    <property type="entry name" value="PTCB-BRCT"/>
    <property type="match status" value="1"/>
</dbReference>
<dbReference type="Pfam" id="PF21298">
    <property type="entry name" value="TopBP1_BRCT0"/>
    <property type="match status" value="1"/>
</dbReference>
<dbReference type="SMART" id="SM00292">
    <property type="entry name" value="BRCT"/>
    <property type="match status" value="7"/>
</dbReference>
<dbReference type="SUPFAM" id="SSF52113">
    <property type="entry name" value="BRCT domain"/>
    <property type="match status" value="6"/>
</dbReference>
<dbReference type="SUPFAM" id="SSF48201">
    <property type="entry name" value="Uteroglobin-like"/>
    <property type="match status" value="1"/>
</dbReference>
<dbReference type="PROSITE" id="PS50172">
    <property type="entry name" value="BRCT"/>
    <property type="match status" value="7"/>
</dbReference>
<accession>Q92547</accession>
<accession>B7Z7W8</accession>
<accession>Q7LGC1</accession>
<accession>Q9UEB9</accession>
<protein>
    <recommendedName>
        <fullName evidence="37">DNA topoisomerase 2-binding protein 1</fullName>
    </recommendedName>
    <alternativeName>
        <fullName evidence="36">DNA topoisomerase II-beta-binding protein 1</fullName>
        <shortName evidence="36">TopBP1</shortName>
    </alternativeName>
    <alternativeName>
        <fullName evidence="36">DNA topoisomerase II-binding protein 1</fullName>
    </alternativeName>
</protein>
<sequence>MSRNDKEPFFVKFLKSSDNSKCFFKALESIKEFQSEEYLQIITEEEALKIKENDRSLYICDPFSGVVFDHLKKLGCRIVGPQVVIFCMHHQRCVPRAEHPVYNMVMSDVTISCTSLEKEKREEVHKYVQMMGGRVYRDLNVSVTHLIAGEVGSKKYLVAANLKKPILLPSWIKTLWEKSQEKKITRYTDINMEDFKCPIFLGCIICVTGLCGLDRKEVQQLTVKHGGQYMGQLKMNECTHLIVQEPKGQKYECAKRWNVHCVTTQWFFDSIEKGFCQDESIYKTEPRPEAKTMPNSSTPTSQINTIDSRTLSDVSNISNINASCVSESICNSLNSKLEPTLENLENLDVSAFQAPEDLLDGCRIYLCGFSGRKLDKLRRLINSGGGVRFNQLNEDVTHVIVGDYDDELKQFWNKSAHRPHVVGAKWLLECFSKGYMLSEEPYIHANYQPVEIPVSHKPESKAALLKKKNSSFSKKDFAPSEKHEQADEDLLSQYENGSSTVVEAKTSEARPFNDSTHAEPLNDSTHISLQEENQSSVSHCVPDVSTITEEGLFSQKSFLVLGFSNENESNIANIIKENAGKIMSLLSRTVADYAVVPLLGCEVEATVGEVVTNTWLVTCIDYQTLFDPKSNPLFTPVPVMTGMTPLEDCVISFSQCAGAEKESLTFLANLLGASVQEYFVRKSNAKKGMFASTHLILKERGGSKYEAAKKWNLPAVTIAWLLETARTGKRADESHFLIENSTKEERSLETEITNGINLNSDTAEHPGTRLQTHRKTVVTPLDMNRFQSKAFRAVVSQHARQVAASPAVGQPLQKEPSLHLDTPSKFLSKDKLFKPSFDVKDALAALETPGRPSQQKRKPSTPLSEVIVKNLQLALANSSRNAVALSASPQLKEAQSEKEEAPKPLHKVVVCVSKKLSKKQSELNGIAASLGADYRWSFDETVTHFIYQGRPNDTNREYKSVKERGVHIVSEHWLLDCAQECKHLPESLYPHTYNPKMSLDISAVQDGRLCNSRLLSAVSSTKDDEPDPLILEENDVDNMATNNKESAPSNGSGKNDSKGVLTQTLEMRENFQKQLQEIMSATSIVKPQGQRTSLSRSGCNSASSTPDSTRSARSGRSRVLEALRQSRQTVPDVNTEPSQNEQIIWDDPTAREERARLASNLQWPSCPTQYSELQVDIQNLEDSPFQKPLHDSEIAKQAVCDPGNIRVTEAPKHPISEELETPIKDSHLIPTPQAPSIAFPLANPPVAPHPREKIITIEETHEELKKQYIFQLSSLNPQERIDYCHLIEKLGGLVIEKQCFDPTCTHIVVGHPLRNEKYLASVAAGKWVLHRSYLEACRTAGHFVQEEDYEWGSSSILDVLTGINVQQRRLALAAMRWRKKIQQRQESGIVEGAFSGWKVILHVDQSREAGFKRLLQSGGAKVLPGHSVPLFKEATHLFSDLNKLKPDDSGVNIAEAAAQNVYCLRTEYIADYLMQESPPHVENYCLPEAISFIQNNKELGTGLSQKRKAPTEKNKIKRPRVH</sequence>
<name>TOPB1_HUMAN</name>